<accession>P03369</accession>
<feature type="initiator methionine" description="Removed; by host" evidence="1">
    <location>
        <position position="1"/>
    </location>
</feature>
<feature type="chain" id="PRO_0000261260" description="Gag-Pol polyprotein">
    <location>
        <begin position="2"/>
        <end position="1437"/>
    </location>
</feature>
<feature type="chain" id="PRO_0000042321" description="Matrix protein p17" evidence="1">
    <location>
        <begin position="2"/>
        <end position="134"/>
    </location>
</feature>
<feature type="chain" id="PRO_0000042322" description="Capsid protein p24" evidence="1">
    <location>
        <begin position="135"/>
        <end position="365"/>
    </location>
</feature>
<feature type="peptide" id="PRO_0000042323" description="Spacer peptide 1" evidence="1">
    <location>
        <begin position="366"/>
        <end position="379"/>
    </location>
</feature>
<feature type="chain" id="PRO_0000042324" description="Nucleocapsid protein p7" evidence="1">
    <location>
        <begin position="380"/>
        <end position="434"/>
    </location>
</feature>
<feature type="peptide" id="PRO_0000246709" description="Transframe peptide" evidence="8">
    <location>
        <begin position="435"/>
        <end position="442"/>
    </location>
</feature>
<feature type="chain" id="PRO_0000042325" description="p6-pol" evidence="8">
    <location>
        <begin position="443"/>
        <end position="490"/>
    </location>
</feature>
<feature type="chain" id="PRO_0000038651" description="Protease" evidence="1">
    <location>
        <begin position="491"/>
        <end position="589"/>
    </location>
</feature>
<feature type="chain" id="PRO_0000042326" description="Reverse transcriptase/ribonuclease H" evidence="1">
    <location>
        <begin position="590"/>
        <end position="1149"/>
    </location>
</feature>
<feature type="chain" id="PRO_0000042327" description="p51 RT" evidence="1">
    <location>
        <begin position="590"/>
        <end position="1029"/>
    </location>
</feature>
<feature type="chain" id="PRO_0000042328" description="p15" evidence="1">
    <location>
        <begin position="1030"/>
        <end position="1149"/>
    </location>
</feature>
<feature type="chain" id="PRO_0000042329" description="Integrase" evidence="1">
    <location>
        <begin position="1150"/>
        <end position="1437"/>
    </location>
</feature>
<feature type="domain" description="Peptidase A2" evidence="10">
    <location>
        <begin position="510"/>
        <end position="579"/>
    </location>
</feature>
<feature type="domain" description="Reverse transcriptase" evidence="11">
    <location>
        <begin position="633"/>
        <end position="823"/>
    </location>
</feature>
<feature type="domain" description="RNase H type-1" evidence="12">
    <location>
        <begin position="1023"/>
        <end position="1146"/>
    </location>
</feature>
<feature type="domain" description="Integrase catalytic" evidence="14">
    <location>
        <begin position="1203"/>
        <end position="1353"/>
    </location>
</feature>
<feature type="zinc finger region" description="CCHC-type 1" evidence="9">
    <location>
        <begin position="392"/>
        <end position="409"/>
    </location>
</feature>
<feature type="zinc finger region" description="CCHC-type 2" evidence="9">
    <location>
        <begin position="413"/>
        <end position="430"/>
    </location>
</feature>
<feature type="zinc finger region" description="Integrase-type" evidence="13">
    <location>
        <begin position="1152"/>
        <end position="1193"/>
    </location>
</feature>
<feature type="DNA-binding region" description="Integrase-type" evidence="15">
    <location>
        <begin position="1372"/>
        <end position="1419"/>
    </location>
</feature>
<feature type="region of interest" description="Interaction with Gp41" evidence="7">
    <location>
        <begin position="7"/>
        <end position="31"/>
    </location>
</feature>
<feature type="region of interest" description="Interaction with host CALM1" evidence="5">
    <location>
        <begin position="8"/>
        <end position="43"/>
    </location>
</feature>
<feature type="region of interest" description="Interaction with host AP3D1" evidence="7">
    <location>
        <begin position="12"/>
        <end position="19"/>
    </location>
</feature>
<feature type="region of interest" description="Interaction with membrane phosphatidylinositol 4,5-bisphosphate and RNA" evidence="7">
    <location>
        <begin position="14"/>
        <end position="33"/>
    </location>
</feature>
<feature type="region of interest" description="Interaction with membrane phosphatidylinositol 4,5-bisphosphate" evidence="7">
    <location>
        <begin position="73"/>
        <end position="77"/>
    </location>
</feature>
<feature type="region of interest" description="Disordered" evidence="17">
    <location>
        <begin position="106"/>
        <end position="129"/>
    </location>
</feature>
<feature type="region of interest" description="Interaction with human PPIA/CYPA and NUP153" evidence="7">
    <location>
        <begin position="191"/>
        <end position="229"/>
    </location>
</feature>
<feature type="region of interest" description="Dimerization/Multimerization of capsid protein p24" evidence="5">
    <location>
        <begin position="279"/>
        <end position="365"/>
    </location>
</feature>
<feature type="region of interest" description="Dimerization of protease" evidence="5">
    <location>
        <begin position="491"/>
        <end position="495"/>
    </location>
</feature>
<feature type="region of interest" description="Dimerization of protease" evidence="5">
    <location>
        <begin position="539"/>
        <end position="545"/>
    </location>
</feature>
<feature type="region of interest" description="Dimerization of protease" evidence="5">
    <location>
        <begin position="578"/>
        <end position="590"/>
    </location>
</feature>
<feature type="region of interest" description="RT 'primer grip'" evidence="1">
    <location>
        <begin position="816"/>
        <end position="824"/>
    </location>
</feature>
<feature type="short sequence motif" description="Nuclear export signal" evidence="1">
    <location>
        <begin position="16"/>
        <end position="22"/>
    </location>
</feature>
<feature type="short sequence motif" description="Nuclear localization signal" evidence="1">
    <location>
        <begin position="26"/>
        <end position="32"/>
    </location>
</feature>
<feature type="short sequence motif" description="Tryptophan repeat motif" evidence="1">
    <location>
        <begin position="987"/>
        <end position="1003"/>
    </location>
</feature>
<feature type="active site" description="For protease activity; shared with dimeric partner" evidence="16">
    <location>
        <position position="515"/>
    </location>
</feature>
<feature type="binding site" evidence="1">
    <location>
        <position position="699"/>
    </location>
    <ligand>
        <name>Mg(2+)</name>
        <dbReference type="ChEBI" id="CHEBI:18420"/>
        <label>1</label>
        <note>catalytic; for reverse transcriptase activity</note>
    </ligand>
</feature>
<feature type="binding site" evidence="1">
    <location>
        <position position="774"/>
    </location>
    <ligand>
        <name>Mg(2+)</name>
        <dbReference type="ChEBI" id="CHEBI:18420"/>
        <label>1</label>
        <note>catalytic; for reverse transcriptase activity</note>
    </ligand>
</feature>
<feature type="binding site" evidence="1">
    <location>
        <position position="775"/>
    </location>
    <ligand>
        <name>Mg(2+)</name>
        <dbReference type="ChEBI" id="CHEBI:18420"/>
        <label>1</label>
        <note>catalytic; for reverse transcriptase activity</note>
    </ligand>
</feature>
<feature type="binding site" evidence="1">
    <location>
        <position position="1032"/>
    </location>
    <ligand>
        <name>Mg(2+)</name>
        <dbReference type="ChEBI" id="CHEBI:18420"/>
        <label>2</label>
        <note>catalytic; for RNase H activity</note>
    </ligand>
</feature>
<feature type="binding site" evidence="1">
    <location>
        <position position="1067"/>
    </location>
    <ligand>
        <name>Mg(2+)</name>
        <dbReference type="ChEBI" id="CHEBI:18420"/>
        <label>2</label>
        <note>catalytic; for RNase H activity</note>
    </ligand>
</feature>
<feature type="binding site" evidence="1">
    <location>
        <position position="1087"/>
    </location>
    <ligand>
        <name>Mg(2+)</name>
        <dbReference type="ChEBI" id="CHEBI:18420"/>
        <label>2</label>
        <note>catalytic; for RNase H activity</note>
    </ligand>
</feature>
<feature type="binding site" evidence="1">
    <location>
        <position position="1138"/>
    </location>
    <ligand>
        <name>Mg(2+)</name>
        <dbReference type="ChEBI" id="CHEBI:18420"/>
        <label>2</label>
        <note>catalytic; for RNase H activity</note>
    </ligand>
</feature>
<feature type="binding site" evidence="13">
    <location>
        <position position="1161"/>
    </location>
    <ligand>
        <name>Zn(2+)</name>
        <dbReference type="ChEBI" id="CHEBI:29105"/>
    </ligand>
</feature>
<feature type="binding site" evidence="13">
    <location>
        <position position="1165"/>
    </location>
    <ligand>
        <name>Zn(2+)</name>
        <dbReference type="ChEBI" id="CHEBI:29105"/>
    </ligand>
</feature>
<feature type="binding site" evidence="13">
    <location>
        <position position="1189"/>
    </location>
    <ligand>
        <name>Zn(2+)</name>
        <dbReference type="ChEBI" id="CHEBI:29105"/>
    </ligand>
</feature>
<feature type="binding site" evidence="13">
    <location>
        <position position="1192"/>
    </location>
    <ligand>
        <name>Zn(2+)</name>
        <dbReference type="ChEBI" id="CHEBI:29105"/>
    </ligand>
</feature>
<feature type="binding site" evidence="1">
    <location>
        <position position="1213"/>
    </location>
    <ligand>
        <name>Mg(2+)</name>
        <dbReference type="ChEBI" id="CHEBI:18420"/>
        <label>3</label>
        <note>catalytic; for integrase activity</note>
    </ligand>
</feature>
<feature type="binding site" evidence="1">
    <location>
        <position position="1265"/>
    </location>
    <ligand>
        <name>Mg(2+)</name>
        <dbReference type="ChEBI" id="CHEBI:18420"/>
        <label>3</label>
        <note>catalytic; for integrase activity</note>
    </ligand>
</feature>
<feature type="binding site" evidence="5">
    <location>
        <position position="1301"/>
    </location>
    <ligand>
        <name>Mg(2+)</name>
        <dbReference type="ChEBI" id="CHEBI:18420"/>
        <label>3</label>
        <note>catalytic; for integrase activity</note>
    </ligand>
</feature>
<feature type="site" description="Cleavage; by viral protease" evidence="1">
    <location>
        <begin position="134"/>
        <end position="135"/>
    </location>
</feature>
<feature type="site" description="Cis/trans isomerization of proline peptide bond; by human PPIA/CYPA" evidence="1">
    <location>
        <begin position="223"/>
        <end position="224"/>
    </location>
</feature>
<feature type="site" description="Cleavage; by viral protease" evidence="1">
    <location>
        <begin position="365"/>
        <end position="366"/>
    </location>
</feature>
<feature type="site" description="Cleavage; by viral protease" evidence="1">
    <location>
        <begin position="379"/>
        <end position="380"/>
    </location>
</feature>
<feature type="site" description="Cleavage; by viral protease" evidence="8">
    <location>
        <begin position="434"/>
        <end position="435"/>
    </location>
</feature>
<feature type="site" description="Cleavage; by viral protease" evidence="1">
    <location>
        <begin position="442"/>
        <end position="443"/>
    </location>
</feature>
<feature type="site" description="Cleavage; by viral protease" evidence="1">
    <location>
        <begin position="490"/>
        <end position="491"/>
    </location>
</feature>
<feature type="site" description="Cleavage; by viral protease" evidence="1">
    <location>
        <begin position="589"/>
        <end position="590"/>
    </location>
</feature>
<feature type="site" description="Essential for RT p66/p51 heterodimerization" evidence="1">
    <location>
        <position position="990"/>
    </location>
</feature>
<feature type="site" description="Essential for RT p66/p51 heterodimerization" evidence="1">
    <location>
        <position position="1003"/>
    </location>
</feature>
<feature type="site" description="Cleavage; by viral protease; partial" evidence="1">
    <location>
        <begin position="1029"/>
        <end position="1030"/>
    </location>
</feature>
<feature type="site" description="Cleavage; by viral protease" evidence="1">
    <location>
        <begin position="1149"/>
        <end position="1150"/>
    </location>
</feature>
<feature type="modified residue" description="Phosphotyrosine; by host" evidence="1">
    <location>
        <position position="134"/>
    </location>
</feature>
<feature type="lipid moiety-binding region" description="N-myristoyl glycine; by host" evidence="1">
    <location>
        <position position="2"/>
    </location>
</feature>
<feature type="turn" evidence="24">
    <location>
        <begin position="476"/>
        <end position="479"/>
    </location>
</feature>
<feature type="strand" evidence="24">
    <location>
        <begin position="485"/>
        <end position="487"/>
    </location>
</feature>
<feature type="strand" evidence="27">
    <location>
        <begin position="492"/>
        <end position="494"/>
    </location>
</feature>
<feature type="strand" evidence="22">
    <location>
        <begin position="495"/>
        <end position="497"/>
    </location>
</feature>
<feature type="strand" evidence="22">
    <location>
        <begin position="500"/>
        <end position="505"/>
    </location>
</feature>
<feature type="strand" evidence="22">
    <location>
        <begin position="508"/>
        <end position="514"/>
    </location>
</feature>
<feature type="strand" evidence="21">
    <location>
        <begin position="518"/>
        <end position="520"/>
    </location>
</feature>
<feature type="strand" evidence="21">
    <location>
        <begin position="522"/>
        <end position="525"/>
    </location>
</feature>
<feature type="strand" evidence="22">
    <location>
        <begin position="532"/>
        <end position="539"/>
    </location>
</feature>
<feature type="strand" evidence="22">
    <location>
        <begin position="542"/>
        <end position="556"/>
    </location>
</feature>
<feature type="strand" evidence="22">
    <location>
        <begin position="559"/>
        <end position="568"/>
    </location>
</feature>
<feature type="strand" evidence="20">
    <location>
        <begin position="571"/>
        <end position="575"/>
    </location>
</feature>
<feature type="helix" evidence="22">
    <location>
        <begin position="577"/>
        <end position="580"/>
    </location>
</feature>
<feature type="turn" evidence="22">
    <location>
        <begin position="581"/>
        <end position="584"/>
    </location>
</feature>
<feature type="strand" evidence="22">
    <location>
        <begin position="586"/>
        <end position="588"/>
    </location>
</feature>
<feature type="strand" evidence="26">
    <location>
        <begin position="599"/>
        <end position="601"/>
    </location>
</feature>
<feature type="strand" evidence="25">
    <location>
        <begin position="604"/>
        <end position="606"/>
    </location>
</feature>
<feature type="strand" evidence="23">
    <location>
        <begin position="615"/>
        <end position="620"/>
    </location>
</feature>
<comment type="function">
    <molecule>Gag-Pol polyprotein</molecule>
    <text evidence="1">Mediates, with Gag polyprotein, the essential events in virion assembly, including binding the plasma membrane, making the protein-protein interactions necessary to create spherical particles, recruiting the viral Env proteins, and packaging the genomic RNA via direct interactions with the RNA packaging sequence (Psi). Gag-Pol polyprotein may regulate its own translation, by the binding genomic RNA in the 5'-UTR. At low concentration, the polyprotein would promote translation, whereas at high concentration, the polyprotein would encapsidate genomic RNA and then shut off translation.</text>
</comment>
<comment type="function">
    <molecule>Matrix protein p17</molecule>
    <text evidence="7">Targets the polyprotein to the plasma membrane via a multipartite membrane-binding signal, that includes its myristoylated N-terminus. Matrix protein is part of the pre-integration complex. Implicated in the release from host cell mediated by Vpu. Binds to RNA.</text>
</comment>
<comment type="function">
    <molecule>Capsid protein p24</molecule>
    <text evidence="5 7">Forms the conical core that encapsulates the genomic RNA-nucleocapsid complex in the virion. Most core are conical, with only 7% tubular. The core is constituted by capsid protein hexamer subunits. The core is disassembled soon after virion entry (By similarity). Host restriction factors such as TRIM5-alpha or TRIMCyp bind retroviral capsids and cause premature capsid disassembly, leading to blocks in reverse transcription. Capsid restriction by TRIM5 is one of the factors which restricts HIV-1 to the human species. Host PIN1 apparently facilitates the virion uncoating. On the other hand, interactions with PDZD8 or CYPA stabilize the capsid.</text>
</comment>
<comment type="function">
    <molecule>Nucleocapsid protein p7</molecule>
    <text evidence="5">Encapsulates and protects viral dimeric unspliced genomic RNA (gRNA). Binds these RNAs through its zinc fingers. Acts as a nucleic acid chaperone which is involved in rearangement of nucleic acid secondary structure during gRNA retrotranscription. Also facilitates template switch leading to recombination. As part of the polyprotein, participates in gRNA dimerization, packaging, tRNA incorporation and virion assembly.</text>
</comment>
<comment type="function">
    <molecule>Protease</molecule>
    <text evidence="5 10">Aspartyl protease that mediates proteolytic cleavages of Gag and Gag-Pol polyproteins during or shortly after the release of the virion from the plasma membrane. Cleavages take place as an ordered, step-wise cascade to yield mature proteins. This process is called maturation. Displays maximal activity during the budding process just prior to particle release from the cell. Also cleaves Nef and Vif, probably concomitantly with viral structural proteins on maturation of virus particles. Hydrolyzes host EIF4GI and PABP1 in order to shut off the capped cellular mRNA translation. The resulting inhibition of cellular protein synthesis serves to ensure maximal viral gene expression and to evade host immune response. Also mediates cleavage of host YTHDF3. Mediates cleavage of host CARD8, thereby activating the CARD8 inflammasome, leading to the clearance of latent HIV-1 in patient CD4(+) T-cells after viral reactivation; in contrast, HIV-1 can evade CARD8-sensing when its protease remains inactive in infected cells prior to viral budding (By similarity).</text>
</comment>
<comment type="function">
    <molecule>Reverse transcriptase/ribonuclease H</molecule>
    <text evidence="5">Multifunctional enzyme that converts the viral RNA genome into dsDNA in the cytoplasm, shortly after virus entry into the cell. This enzyme displays a DNA polymerase activity that can copy either DNA or RNA templates, and a ribonuclease H (RNase H) activity that cleaves the RNA strand of RNA-DNA heteroduplexes in a partially processive 3' to 5' endonucleasic mode. Conversion of viral genomic RNA into dsDNA requires many steps. A tRNA(3)-Lys binds to the primer-binding site (PBS) situated at the 5'-end of the viral RNA. RT uses the 3' end of the tRNA primer to perform a short round of RNA-dependent minus-strand DNA synthesis. The reading proceeds through the U5 region and ends after the repeated (R) region which is present at both ends of viral RNA. The portion of the RNA-DNA heteroduplex is digested by the RNase H, resulting in a ssDNA product attached to the tRNA primer. This ssDNA/tRNA hybridizes with the identical R region situated at the 3' end of viral RNA. This template exchange, known as minus-strand DNA strong stop transfer, can be either intra- or intermolecular. RT uses the 3' end of this newly synthesized short ssDNA to perform the RNA-dependent minus-strand DNA synthesis of the whole template. RNase H digests the RNA template except for two polypurine tracts (PPTs) situated at the 5'-end and near the center of the genome. It is not clear if both polymerase and RNase H activities are simultaneous. RNase H probably can proceed both in a polymerase-dependent (RNA cut into small fragments by the same RT performing DNA synthesis) and a polymerase-independent mode (cleavage of remaining RNA fragments by free RTs). Secondly, RT performs DNA-directed plus-strand DNA synthesis using the PPTs that have not been removed by RNase H as primers. PPTs and tRNA primers are then removed by RNase H. The 3' and 5' ssDNA PBS regions hybridize to form a circular dsDNA intermediate. Strand displacement synthesis by RT to the PBS and PPT ends produces a blunt ended, linear dsDNA copy of the viral genome that includes long terminal repeats (LTRs) at both ends.</text>
</comment>
<comment type="function">
    <molecule>Integrase</molecule>
    <text evidence="5">Catalyzes viral DNA integration into the host chromosome, by performing a series of DNA cutting and joining reactions. This enzyme activity takes place after virion entry into a cell and reverse transcription of the RNA genome in dsDNA. The first step in the integration process is 3' processing. This step requires a complex comprising the viral genome, matrix protein, Vpr and integrase. This complex is called the pre-integration complex (PIC). The integrase protein removes 2 nucleotides from each 3' end of the viral DNA, leaving recessed CA OH's at the 3' ends. In the second step, the PIC enters cell nucleus. This process is mediated through integrase and Vpr proteins, and allows the virus to infect a non dividing cell. This ability to enter the nucleus is specific of lentiviruses, other retroviruses cannot and rely on cell division to access cell chromosomes. In the third step, termed strand transfer, the integrase protein joins the previously processed 3' ends to the 5' ends of strands of target cellular DNA at the site of integration. The 5'-ends are produced by integrase-catalyzed staggered cuts, 5 bp apart. A Y-shaped, gapped, recombination intermediate results, with the 5'-ends of the viral DNA strands and the 3' ends of target DNA strands remaining unjoined, flanking a gap of 5 bp. The last step is viral DNA integration into host chromosome. This involves host DNA repair synthesis in which the 5 bp gaps between the unjoined strands are filled in and then ligated. Since this process occurs at both cuts flanking the HIV genome, a 5 bp duplication of host DNA is produced at the ends of HIV-1 integration. Alternatively, Integrase may catalyze the excision of viral DNA just after strand transfer, this is termed disintegration.</text>
</comment>
<comment type="catalytic activity">
    <reaction evidence="10">
        <text>Specific for a P1 residue that is hydrophobic, and P1' variable, but often Pro.</text>
        <dbReference type="EC" id="3.4.23.16"/>
    </reaction>
</comment>
<comment type="catalytic activity">
    <reaction evidence="1">
        <text>Endohydrolysis of RNA in RNA/DNA hybrids. Three different cleavage modes: 1. sequence-specific internal cleavage of RNA. Human immunodeficiency virus type 1 and Moloney murine leukemia virus enzymes prefer to cleave the RNA strand one nucleotide away from the RNA-DNA junction. 2. RNA 5'-end directed cleavage 13-19 nucleotides from the RNA end. 3. DNA 3'-end directed cleavage 15-20 nucleotides away from the primer terminus.</text>
        <dbReference type="EC" id="3.1.26.13"/>
    </reaction>
</comment>
<comment type="catalytic activity">
    <reaction evidence="1">
        <text>3'-end directed exonucleolytic cleavage of viral RNA-DNA hybrid.</text>
        <dbReference type="EC" id="3.1.13.2"/>
    </reaction>
</comment>
<comment type="catalytic activity">
    <reaction evidence="11">
        <text>DNA(n) + a 2'-deoxyribonucleoside 5'-triphosphate = DNA(n+1) + diphosphate</text>
        <dbReference type="Rhea" id="RHEA:22508"/>
        <dbReference type="Rhea" id="RHEA-COMP:17339"/>
        <dbReference type="Rhea" id="RHEA-COMP:17340"/>
        <dbReference type="ChEBI" id="CHEBI:33019"/>
        <dbReference type="ChEBI" id="CHEBI:61560"/>
        <dbReference type="ChEBI" id="CHEBI:173112"/>
        <dbReference type="EC" id="2.7.7.49"/>
    </reaction>
</comment>
<comment type="catalytic activity">
    <reaction evidence="11">
        <text>DNA(n) + a 2'-deoxyribonucleoside 5'-triphosphate = DNA(n+1) + diphosphate</text>
        <dbReference type="Rhea" id="RHEA:22508"/>
        <dbReference type="Rhea" id="RHEA-COMP:17339"/>
        <dbReference type="Rhea" id="RHEA-COMP:17340"/>
        <dbReference type="ChEBI" id="CHEBI:33019"/>
        <dbReference type="ChEBI" id="CHEBI:61560"/>
        <dbReference type="ChEBI" id="CHEBI:173112"/>
        <dbReference type="EC" id="2.7.7.7"/>
    </reaction>
</comment>
<comment type="cofactor">
    <cofactor evidence="1">
        <name>Mg(2+)</name>
        <dbReference type="ChEBI" id="CHEBI:18420"/>
    </cofactor>
    <text evidence="1">Binds 2 magnesium ions for reverse transcriptase polymerase activity.</text>
</comment>
<comment type="cofactor">
    <cofactor evidence="1">
        <name>Mg(2+)</name>
        <dbReference type="ChEBI" id="CHEBI:18420"/>
    </cofactor>
    <text evidence="1">Binds 2 magnesium ions for ribonuclease H (RNase H) activity. Substrate-binding is a precondition for magnesium binding.</text>
</comment>
<comment type="cofactor">
    <cofactor evidence="1">
        <name>Mg(2+)</name>
        <dbReference type="ChEBI" id="CHEBI:18420"/>
    </cofactor>
    <text evidence="1">Magnesium ions are required for integrase activity. Binds at least 1, maybe 2 magnesium ions.</text>
</comment>
<comment type="activity regulation">
    <text evidence="1">Protease: The viral protease is inhibited by many synthetic protease inhibitors (PIs), such as amprenavir, atazanavir, indinavir, loprinavir, nelfinavir, ritonavir and saquinavir. Use of protease inhibitors in tritherapy regimens permit more ambitious therapeutic strategies. Reverse transcriptase/ribonuclease H: RT can be inhibited either by nucleoside RT inhibitors (NRTIs) or by non nucleoside RT inhibitors (NNRTIs). NRTIs act as chain terminators, whereas NNRTIs inhibit DNA polymerization by binding a small hydrophobic pocket near the RT active site and inducing an allosteric change in this region. Classical NRTIs are abacavir, adefovir (PMEA), didanosine (ddI), lamivudine (3TC), stavudine (d4T), tenofovir (PMPA), zalcitabine (ddC), and zidovudine (AZT). Classical NNRTIs are atevirdine (BHAP U-87201E), delavirdine, efavirenz (DMP-266), emivirine (I-EBU), and nevirapine (BI-RG-587). The tritherapies used as a basic effective treatment of AIDS associate two NRTIs and one NNRTI.</text>
</comment>
<comment type="subunit">
    <molecule>Matrix protein p17</molecule>
    <text evidence="5 7">Homotrimer; further assembles as hexamers of trimers (By similarity). Interacts with gp41 (via C-terminus) (By similarity). Interacts with host CALM1; this interaction induces a conformational change in the Matrix protein, triggering exposure of the myristate group (By similarity). Interacts with host AP3D1; this interaction allows the polyprotein trafficking to multivesicular bodies during virus assembly (By similarity). Part of the pre-integration complex (PIC) which is composed of viral genome, matrix protein, Vpr and integrase (By similarity).</text>
</comment>
<comment type="subunit">
    <molecule>Capsid protein p24</molecule>
    <text evidence="5 7">Homodimer; the homodimer further multimerizes as homohexamers or homopentamers. Interacts with human PPIA/CYPA (By similarity); This interaction stabilizes the capsid. Interacts with human NUP153 (By similarity). Interacts with host PDZD8; this interaction stabilizes the capsid (By similarity). Interacts with monkey TRIM5; this interaction destabilizes the capsid (By similarity).</text>
</comment>
<comment type="subunit">
    <molecule>Protease</molecule>
    <text evidence="5 7">Homodimer, whose active site consists of two apposed aspartic acid residues.</text>
</comment>
<comment type="subunit">
    <molecule>Reverse transcriptase/ribonuclease H</molecule>
    <text evidence="3">Heterodimer of p66 RT and p51 RT (RT p66/p51) (By similarity). Heterodimerization of RT is essential for DNA polymerase activity (By similarity). The overall folding of the subdomains is similar in p66 RT and p51 RT but the spatial arrangements of the subdomains are dramatically different (By similarity).</text>
</comment>
<comment type="subunit">
    <molecule>Integrase</molecule>
    <text evidence="4 5 7">Homotetramer; may further associate as a homohexadecamer (By similarity). Part of the pre-integration complex (PIC) which is composed of viral genome, matrix protein, Vpr and integrase. Interacts with human SMARCB1/INI1 and human PSIP1/LEDGF isoform 1. Interacts with human KPNA3; this interaction might play a role in nuclear import of the pre-integration complex (By similarity). Interacts with human NUP153; this interaction might play a role in nuclear import of the pre-integration complex (By similarity).</text>
</comment>
<comment type="subcellular location">
    <molecule>Gag-Pol polyprotein</molecule>
    <subcellularLocation>
        <location>Host cell membrane</location>
        <topology>Lipid-anchor</topology>
    </subcellularLocation>
    <subcellularLocation>
        <location>Host endosome</location>
        <location>Host multivesicular body</location>
    </subcellularLocation>
    <text evidence="7">These locations are linked to virus assembly sites. The main location is the cell membrane, but under some circumstances, late endosomal compartments can serve as productive sites for virion assembly.</text>
</comment>
<comment type="subcellular location">
    <molecule>Matrix protein p17</molecule>
    <subcellularLocation>
        <location>Virion membrane</location>
        <topology evidence="19">Lipid-anchor</topology>
    </subcellularLocation>
    <subcellularLocation>
        <location evidence="1">Host nucleus</location>
    </subcellularLocation>
    <subcellularLocation>
        <location evidence="1">Host cytoplasm</location>
    </subcellularLocation>
</comment>
<comment type="subcellular location">
    <molecule>Capsid protein p24</molecule>
    <subcellularLocation>
        <location evidence="19">Virion</location>
    </subcellularLocation>
</comment>
<comment type="subcellular location">
    <molecule>Nucleocapsid protein p7</molecule>
    <subcellularLocation>
        <location evidence="19">Virion</location>
    </subcellularLocation>
</comment>
<comment type="subcellular location">
    <molecule>Reverse transcriptase/ribonuclease H</molecule>
    <subcellularLocation>
        <location evidence="19">Virion</location>
    </subcellularLocation>
</comment>
<comment type="subcellular location">
    <molecule>Integrase</molecule>
    <subcellularLocation>
        <location evidence="19">Virion</location>
    </subcellularLocation>
    <subcellularLocation>
        <location evidence="19">Host nucleus</location>
    </subcellularLocation>
    <subcellularLocation>
        <location evidence="19">Host cytoplasm</location>
    </subcellularLocation>
    <text evidence="19">Nuclear at initial phase, cytoplasmic at assembly.</text>
</comment>
<comment type="alternative products">
    <event type="ribosomal frameshifting"/>
    <isoform>
        <id>P03369-1</id>
        <name>Gag-Pol polyprotein</name>
        <sequence type="displayed"/>
    </isoform>
    <isoform>
        <id>P03349-1</id>
        <name>Gag polyprotein</name>
        <sequence type="external"/>
    </isoform>
    <text evidence="18">Translation results in the formation of the Gag polyprotein most of the time. Ribosomal frameshifting at the gag-pol genes boundary occurs at low frequency and produces the Gag-Pol polyprotein. This strategy of translation probably allows the virus to modulate the quantity of each viral protein. Maintenance of a correct Gag to Gag-Pol ratio is essential for RNA dimerization and viral infectivity.</text>
</comment>
<comment type="domain">
    <molecule>Reverse transcriptase/ribonuclease H</molecule>
    <text evidence="1">RT is structured in five subdomains: finger, palm, thumb, connection and RNase H. Within the palm subdomain, the 'primer grip' region is thought to be involved in the positioning of the primer terminus for accommodating the incoming nucleotide. The RNase H domain stabilizes the association of RT with primer-template.</text>
</comment>
<comment type="domain">
    <molecule>Reverse transcriptase/ribonuclease H</molecule>
    <text evidence="1">The tryptophan repeat motif is involved in RT p66/p51 dimerization (By similarity).</text>
</comment>
<comment type="domain">
    <molecule>Integrase</molecule>
    <text evidence="1">The core domain contains the D-x(n)-D-x(35)-E motif, named for the phylogenetically conserved glutamic acid and aspartic acid residues and the invariant 35 amino acid spacing between the second and third acidic residues. Each acidic residue of the D,D(35)E motif is independently essential for the 3'-processing and strand transfer activities of purified integrase protein.</text>
</comment>
<comment type="PTM">
    <molecule>Gag-Pol polyprotein</molecule>
    <text evidence="5 11">Specific enzymatic cleavages by the viral protease yield mature proteins. The protease is released by autocatalytic cleavage. The polyprotein is cleaved during and after budding, this process is termed maturation. Proteolytic cleavage of p66 RT removes the RNase H domain to yield the p51 RT subunit. Nucleocapsid protein p7 might be further cleaved after virus entry.</text>
</comment>
<comment type="PTM">
    <molecule>Matrix protein p17</molecule>
    <text evidence="5">Tyrosine phosphorylated presumably in the virion by a host kinase. Phosphorylation is apparently not a major regulator of membrane association.</text>
</comment>
<comment type="PTM">
    <molecule>Capsid protein p24</molecule>
    <text evidence="6">Phosphorylated possibly by host MAPK1; this phosphorylation is necessary for Pin1-mediated virion uncoating.</text>
</comment>
<comment type="PTM">
    <molecule>Nucleocapsid protein p7</molecule>
    <text evidence="2">Methylated by host PRMT6, impairing its function by reducing RNA annealing and the initiation of reverse transcription.</text>
</comment>
<comment type="miscellaneous">
    <molecule>Reverse transcriptase/ribonuclease H</molecule>
    <text evidence="1">Error-prone enzyme that lacks a proof-reading function. High mutations rate is a direct consequence of this characteristic. RT also displays frequent template switching leading to high recombination rate. Recombination mostly occurs between homologous regions of the two copackaged RNA genomes. If these two RNA molecules derive from different viral strains, reverse transcription will give rise to highly recombinated proviral DNAs.</text>
</comment>
<comment type="miscellaneous">
    <text>HIV-1 lineages are divided in three main groups, M (for Major), O (for Outlier), and N (for New, or Non-M, Non-O). The vast majority of strains found worldwide belong to the group M. Group O seems to be endemic to and largely confined to Cameroon and neighboring countries in West Central Africa, where these viruses represent a small minority of HIV-1 strains. The group N is represented by a limited number of isolates from Cameroonian persons. The group M is further subdivided in 9 clades or subtypes (A to D, F to H, J and K).</text>
</comment>
<comment type="miscellaneous">
    <text>Resistance to inhibitors associated with mutations are observed both in viral protease and in reverse transcriptase. Most of the time, single mutations confer only a modest reduction in drug susceptibility. Combination of several mutations is usually required to develop a high-level drug resistance. These mutations are predominantly found in clade B viruses and not in other genotypes. They are listed in the clade B representative isolate HXB2 (AC P04585).</text>
</comment>
<comment type="miscellaneous">
    <molecule>Isoform Gag-Pol polyprotein</molecule>
    <text>Produced by -1 ribosomal frameshifting.</text>
</comment>
<comment type="online information" name="HIV drug resistance mutations">
    <link uri="https://www.iasusa.org/hiv-drug-resistance/hiv-drug-resistance-mutations/"/>
</comment>
<comment type="online information" name="hivdb">
    <link uri="https://hivdb.stanford.edu"/>
    <text>HIV drug resistance database</text>
</comment>
<organism>
    <name type="scientific">Human immunodeficiency virus type 1 group M subtype B (isolate ARV2/SF2)</name>
    <name type="common">HIV-1</name>
    <dbReference type="NCBI Taxonomy" id="11685"/>
    <lineage>
        <taxon>Viruses</taxon>
        <taxon>Riboviria</taxon>
        <taxon>Pararnavirae</taxon>
        <taxon>Artverviricota</taxon>
        <taxon>Revtraviricetes</taxon>
        <taxon>Ortervirales</taxon>
        <taxon>Retroviridae</taxon>
        <taxon>Orthoretrovirinae</taxon>
        <taxon>Lentivirus</taxon>
        <taxon>Human immunodeficiency virus type 1</taxon>
    </lineage>
</organism>
<name>POL_HV1A2</name>
<protein>
    <recommendedName>
        <fullName>Gag-Pol polyprotein</fullName>
    </recommendedName>
    <alternativeName>
        <fullName>Pr160Gag-Pol</fullName>
    </alternativeName>
    <component>
        <recommendedName>
            <fullName>Matrix protein p17</fullName>
            <shortName>MA</shortName>
        </recommendedName>
    </component>
    <component>
        <recommendedName>
            <fullName>Capsid protein p24</fullName>
            <shortName>CA</shortName>
        </recommendedName>
    </component>
    <component>
        <recommendedName>
            <fullName evidence="7">Spacer peptide 1</fullName>
            <shortName>SP1</shortName>
        </recommendedName>
        <alternativeName>
            <fullName>p2</fullName>
        </alternativeName>
    </component>
    <component>
        <recommendedName>
            <fullName>Nucleocapsid protein p7</fullName>
            <shortName>NC</shortName>
        </recommendedName>
    </component>
    <component>
        <recommendedName>
            <fullName>Transframe peptide</fullName>
            <shortName>TF</shortName>
        </recommendedName>
    </component>
    <component>
        <recommendedName>
            <fullName>p6-pol</fullName>
            <shortName>p6*</shortName>
        </recommendedName>
    </component>
    <component>
        <recommendedName>
            <fullName>Protease</fullName>
            <ecNumber>3.4.23.16</ecNumber>
        </recommendedName>
        <alternativeName>
            <fullName>PR</fullName>
        </alternativeName>
        <alternativeName>
            <fullName>Retropepsin</fullName>
        </alternativeName>
    </component>
    <component>
        <recommendedName>
            <fullName>Reverse transcriptase/ribonuclease H</fullName>
            <ecNumber>2.7.7.49</ecNumber>
            <ecNumber>2.7.7.7</ecNumber>
            <ecNumber>3.1.26.13</ecNumber>
        </recommendedName>
        <alternativeName>
            <fullName>Exoribonuclease H</fullName>
            <ecNumber>3.1.13.2</ecNumber>
        </alternativeName>
        <alternativeName>
            <fullName>p66 RT</fullName>
        </alternativeName>
    </component>
    <component>
        <recommendedName>
            <fullName>p51 RT</fullName>
        </recommendedName>
    </component>
    <component>
        <recommendedName>
            <fullName>p15</fullName>
        </recommendedName>
    </component>
    <component>
        <recommendedName>
            <fullName>Integrase</fullName>
            <shortName>IN</shortName>
            <ecNumber evidence="5">2.7.7.-</ecNumber>
            <ecNumber evidence="5">3.1.-.-</ecNumber>
        </recommendedName>
    </component>
</protein>
<sequence>MGARASVLSGGELDKWEKIRLRPGGKKKYKLKHIVWASRELERFAVNPGLLETSEGCRQILGQLQPSLQTGSEELRSLYNTVATLYCVHQRIDVKDTKEALEKIEEEQNKSKKKAQQAAAAAGTGNSSQVSQNYPIVQNLQGQMVHQAISPRTLNAWVKVVEEKAFSPEVIPMFSALSEGATPQDLNTMLNTVGGHQAAMQMLKETINEEAAEWDRVHPVHAGPIAPGQMREPRGSDIAGTTSTLQEQIGWMTNNPPIPVGEIYKRWIILGLNKIVRMYSPTSILDIRQGPKEPFRDYVDRFYKTLRAEQASQDVKNWMTETLLVQNANPDCKTILKALGPAATLEEMMTACQGVGGPGHKARVLAEAMSQVTNPANIMMQRGNFRNQRKTVKCFNCGKEGHIAKNCRAPRKKGCWRCGREGHQMKDCTERQANFLREDLAFLQGKAREFSSEQTRANSPTRRELQVWGGENNSLSEAGADRQGTVSFNFPQITLWQRPLVTIRIGGQLKEALLDTGADDTVLEEMNLPGKWKPKMIGGIGGFIKVRQYDQIPVEICGHKAIGTVLVGPTPVNIIGRNLLTQIGCTLNFPISPIETVPVKLKPGMDGPKVKQWPLTEEKIKALVEICTEMEKEGKISKIGPENPYNTPVFAIKKKDSTKWRKLVDFRELNKRTQDFWEVQLGIPHPAGLKKKKSVTVLDVGDAYFSVPLDKDFRKYTAFTIPSINNETPGIRYQYNVLPQGWKGSPAIFQSSMTKILEPFRKQNPDIVIYQYMDDLYVGSDLEIGQHRTKIEELRQHLLRWGFTTPDKKHQKEPPFLWMGYELHPDKWTVQPIMLPEKDSWTVNDIQKLVGKLNWASQIYAGIKVKQLCKLLRGTKALTEVIPLTEEAELELAENREILKEPVHEVYYDPSKDLVAEIQKQGQGQWTYQIYQEPFKNLKTGKYARMRGAHTNDVKQLTEAVQKVSTESIVIWGKIPKFKLPIQKETWEAWWMEYWQATWIPEWEFVNTPPLVKLWYQLEKEPIVGAETFYVDGAANRETKLGKAGYVTDRGRQKVVSIADTTNQKTELQAIHLALQDSGLEVNIVTDSQYALGIIQAQPDKSESELVSQIIEQLIKKEKVYLAWVPAHKGIGGNEQVDKLVSAGIRKVLFLNGIDKAQEEHEKYHSNWRAMASDFNLPPVVAKEIVASCDKCQLKGEAMHGQVDCSPGIWQLDCTHLEGKIILVAVHVASGYIEAEVIPAETGQETAYFLLKLAGRWPVKTIHTDNGSNFTSTTVKAACWWAGIKQEFGIPYNPQSQGVVESMNNELKKIIGQVRDQAEHLKTAVQMAVFIHNFKRKGGIGGYSAGERIVDIIATDIQTKELQKQITKIQNFRVYYRDNKDPLWKGPAKLLWKGEGAVVIQDNSDIKVVPRRKAKIIRDYGKQMAGDDCVASRQDED</sequence>
<dbReference type="EC" id="3.4.23.16"/>
<dbReference type="EC" id="2.7.7.49"/>
<dbReference type="EC" id="2.7.7.7"/>
<dbReference type="EC" id="3.1.26.13"/>
<dbReference type="EC" id="3.1.13.2"/>
<dbReference type="EC" id="2.7.7.-" evidence="5"/>
<dbReference type="EC" id="3.1.-.-" evidence="5"/>
<dbReference type="EMBL" id="K02007">
    <property type="protein sequence ID" value="AAB59876.1"/>
    <property type="status" value="ALT_SEQ"/>
    <property type="molecule type" value="Genomic_RNA"/>
</dbReference>
<dbReference type="PIR" id="A03968">
    <property type="entry name" value="GNVWA2"/>
</dbReference>
<dbReference type="PDB" id="1AID">
    <property type="method" value="X-ray"/>
    <property type="resolution" value="2.20 A"/>
    <property type="chains" value="A/B=491-589"/>
</dbReference>
<dbReference type="PDB" id="1B6J">
    <property type="method" value="X-ray"/>
    <property type="resolution" value="1.85 A"/>
    <property type="chains" value="A/B=491-589"/>
</dbReference>
<dbReference type="PDB" id="1B6K">
    <property type="method" value="X-ray"/>
    <property type="resolution" value="1.85 A"/>
    <property type="chains" value="A/B=491-589"/>
</dbReference>
<dbReference type="PDB" id="1B6L">
    <property type="method" value="X-ray"/>
    <property type="resolution" value="1.75 A"/>
    <property type="chains" value="A/B=491-589"/>
</dbReference>
<dbReference type="PDB" id="1B6M">
    <property type="method" value="X-ray"/>
    <property type="resolution" value="1.85 A"/>
    <property type="chains" value="A/B=491-589"/>
</dbReference>
<dbReference type="PDB" id="1B6P">
    <property type="method" value="X-ray"/>
    <property type="resolution" value="2.00 A"/>
    <property type="chains" value="A/B=491-589"/>
</dbReference>
<dbReference type="PDB" id="1CPI">
    <property type="method" value="X-ray"/>
    <property type="resolution" value="2.05 A"/>
    <property type="chains" value="A/B=491-589"/>
</dbReference>
<dbReference type="PDB" id="1D4K">
    <property type="method" value="X-ray"/>
    <property type="resolution" value="1.85 A"/>
    <property type="chains" value="A/B=491-589"/>
</dbReference>
<dbReference type="PDB" id="1D4L">
    <property type="method" value="X-ray"/>
    <property type="resolution" value="1.75 A"/>
    <property type="chains" value="A/B=491-589"/>
</dbReference>
<dbReference type="PDB" id="1F7A">
    <property type="method" value="X-ray"/>
    <property type="resolution" value="2.00 A"/>
    <property type="chains" value="A/B=491-589"/>
</dbReference>
<dbReference type="PDB" id="1KJ4">
    <property type="method" value="X-ray"/>
    <property type="resolution" value="2.90 A"/>
    <property type="chains" value="A/B/C/D=491-589"/>
</dbReference>
<dbReference type="PDB" id="1KJ7">
    <property type="method" value="X-ray"/>
    <property type="resolution" value="2.00 A"/>
    <property type="chains" value="A/B=491-589"/>
</dbReference>
<dbReference type="PDB" id="1KJF">
    <property type="method" value="X-ray"/>
    <property type="resolution" value="2.00 A"/>
    <property type="chains" value="A/B=491-589"/>
</dbReference>
<dbReference type="PDB" id="1KJG">
    <property type="method" value="X-ray"/>
    <property type="resolution" value="2.00 A"/>
    <property type="chains" value="A/B=491-589, P=1025-1034"/>
</dbReference>
<dbReference type="PDB" id="1KJH">
    <property type="method" value="X-ray"/>
    <property type="resolution" value="2.00 A"/>
    <property type="chains" value="A/B=491-589"/>
</dbReference>
<dbReference type="PDB" id="1KZK">
    <property type="method" value="X-ray"/>
    <property type="resolution" value="1.09 A"/>
    <property type="chains" value="A/B=491-589"/>
</dbReference>
<dbReference type="PDB" id="1MT7">
    <property type="method" value="X-ray"/>
    <property type="resolution" value="1.90 A"/>
    <property type="chains" value="A/B=491-589"/>
</dbReference>
<dbReference type="PDB" id="1MT8">
    <property type="method" value="X-ray"/>
    <property type="resolution" value="2.15 A"/>
    <property type="chains" value="A/B=491-589"/>
</dbReference>
<dbReference type="PDB" id="1MT9">
    <property type="method" value="X-ray"/>
    <property type="resolution" value="2.00 A"/>
    <property type="chains" value="A/B=491-589"/>
</dbReference>
<dbReference type="PDB" id="1MTB">
    <property type="method" value="X-ray"/>
    <property type="resolution" value="2.50 A"/>
    <property type="chains" value="A/B=491-589"/>
</dbReference>
<dbReference type="PDB" id="1MTR">
    <property type="method" value="X-ray"/>
    <property type="resolution" value="1.75 A"/>
    <property type="chains" value="A/B=491-589"/>
</dbReference>
<dbReference type="PDB" id="1N49">
    <property type="method" value="X-ray"/>
    <property type="resolution" value="2.20 A"/>
    <property type="chains" value="A/B/C/D=491-589"/>
</dbReference>
<dbReference type="PDB" id="1T3R">
    <property type="method" value="X-ray"/>
    <property type="resolution" value="1.20 A"/>
    <property type="chains" value="A/B=491-589"/>
</dbReference>
<dbReference type="PDB" id="1TSQ">
    <property type="method" value="X-ray"/>
    <property type="resolution" value="2.00 A"/>
    <property type="chains" value="A/B=491-589"/>
</dbReference>
<dbReference type="PDB" id="1TSU">
    <property type="method" value="X-ray"/>
    <property type="resolution" value="2.10 A"/>
    <property type="chains" value="A/B=491-589"/>
</dbReference>
<dbReference type="PDB" id="1YTG">
    <property type="method" value="X-ray"/>
    <property type="resolution" value="2.30 A"/>
    <property type="chains" value="A/B=491-589"/>
</dbReference>
<dbReference type="PDB" id="1YTH">
    <property type="method" value="X-ray"/>
    <property type="resolution" value="2.20 A"/>
    <property type="chains" value="A/B=491-589"/>
</dbReference>
<dbReference type="PDB" id="1Z1H">
    <property type="method" value="X-ray"/>
    <property type="resolution" value="1.85 A"/>
    <property type="chains" value="A/B=491-589"/>
</dbReference>
<dbReference type="PDB" id="1Z1R">
    <property type="method" value="X-ray"/>
    <property type="resolution" value="1.85 A"/>
    <property type="chains" value="A/B=491-589"/>
</dbReference>
<dbReference type="PDB" id="2AID">
    <property type="method" value="X-ray"/>
    <property type="resolution" value="1.90 A"/>
    <property type="chains" value="A/B=491-589"/>
</dbReference>
<dbReference type="PDB" id="2F3K">
    <property type="method" value="X-ray"/>
    <property type="resolution" value="1.60 A"/>
    <property type="chains" value="A/B=491-588"/>
</dbReference>
<dbReference type="PDB" id="2FGU">
    <property type="method" value="X-ray"/>
    <property type="resolution" value="2.00 A"/>
    <property type="chains" value="A/B=491-589"/>
</dbReference>
<dbReference type="PDB" id="2FGV">
    <property type="method" value="X-ray"/>
    <property type="resolution" value="1.50 A"/>
    <property type="chains" value="A/B=491-589"/>
</dbReference>
<dbReference type="PDB" id="2FNS">
    <property type="method" value="X-ray"/>
    <property type="resolution" value="1.85 A"/>
    <property type="chains" value="A/B=491-589"/>
</dbReference>
<dbReference type="PDB" id="2FNT">
    <property type="method" value="X-ray"/>
    <property type="resolution" value="1.44 A"/>
    <property type="chains" value="A/B=491-589"/>
</dbReference>
<dbReference type="PDB" id="2J9J">
    <property type="method" value="X-ray"/>
    <property type="resolution" value="1.04 A"/>
    <property type="chains" value="A/B=491-589"/>
</dbReference>
<dbReference type="PDB" id="2J9K">
    <property type="method" value="X-ray"/>
    <property type="resolution" value="1.20 A"/>
    <property type="chains" value="A/B=491-589"/>
</dbReference>
<dbReference type="PDB" id="2JE4">
    <property type="method" value="X-ray"/>
    <property type="resolution" value="1.07 A"/>
    <property type="chains" value="A/B=491-589"/>
</dbReference>
<dbReference type="PDB" id="2NXD">
    <property type="method" value="X-ray"/>
    <property type="resolution" value="2.00 A"/>
    <property type="chains" value="A/B=491-589"/>
</dbReference>
<dbReference type="PDB" id="2NXL">
    <property type="method" value="X-ray"/>
    <property type="resolution" value="2.00 A"/>
    <property type="chains" value="A/B=491-589"/>
</dbReference>
<dbReference type="PDB" id="2NXM">
    <property type="method" value="X-ray"/>
    <property type="resolution" value="2.25 A"/>
    <property type="chains" value="A/B=491-589"/>
</dbReference>
<dbReference type="PDB" id="2Q3K">
    <property type="method" value="X-ray"/>
    <property type="resolution" value="2.00 A"/>
    <property type="chains" value="A/B=491-589"/>
</dbReference>
<dbReference type="PDB" id="2QHY">
    <property type="method" value="X-ray"/>
    <property type="resolution" value="1.85 A"/>
    <property type="chains" value="A/B=491-589"/>
</dbReference>
<dbReference type="PDB" id="2QHZ">
    <property type="method" value="X-ray"/>
    <property type="resolution" value="1.85 A"/>
    <property type="chains" value="A/B=491-589"/>
</dbReference>
<dbReference type="PDB" id="2QI0">
    <property type="method" value="X-ray"/>
    <property type="resolution" value="2.10 A"/>
    <property type="chains" value="A/B=491-589"/>
</dbReference>
<dbReference type="PDB" id="2QI1">
    <property type="method" value="X-ray"/>
    <property type="resolution" value="2.00 A"/>
    <property type="chains" value="A/B=491-589"/>
</dbReference>
<dbReference type="PDB" id="2QI3">
    <property type="method" value="X-ray"/>
    <property type="resolution" value="1.95 A"/>
    <property type="chains" value="A/B=491-589"/>
</dbReference>
<dbReference type="PDB" id="2QI4">
    <property type="method" value="X-ray"/>
    <property type="resolution" value="1.80 A"/>
    <property type="chains" value="A/B=491-589"/>
</dbReference>
<dbReference type="PDB" id="2QI5">
    <property type="method" value="X-ray"/>
    <property type="resolution" value="1.85 A"/>
    <property type="chains" value="A/B=491-589"/>
</dbReference>
<dbReference type="PDB" id="2QI6">
    <property type="method" value="X-ray"/>
    <property type="resolution" value="1.85 A"/>
    <property type="chains" value="A/B=491-589"/>
</dbReference>
<dbReference type="PDB" id="2QI7">
    <property type="method" value="X-ray"/>
    <property type="resolution" value="1.85 A"/>
    <property type="chains" value="A/B=491-589"/>
</dbReference>
<dbReference type="PDB" id="3AID">
    <property type="method" value="X-ray"/>
    <property type="resolution" value="2.50 A"/>
    <property type="chains" value="A/B=491-589"/>
</dbReference>
<dbReference type="PDB" id="3BXR">
    <property type="method" value="X-ray"/>
    <property type="resolution" value="1.60 A"/>
    <property type="chains" value="A/B=491-589"/>
</dbReference>
<dbReference type="PDB" id="3BXS">
    <property type="method" value="X-ray"/>
    <property type="resolution" value="1.60 A"/>
    <property type="chains" value="A/B=491-589"/>
</dbReference>
<dbReference type="PDB" id="3EKP">
    <property type="method" value="X-ray"/>
    <property type="resolution" value="2.15 A"/>
    <property type="chains" value="A/B/C/D=491-589"/>
</dbReference>
<dbReference type="PDB" id="3EKQ">
    <property type="method" value="X-ray"/>
    <property type="resolution" value="2.20 A"/>
    <property type="chains" value="A/B=491-589"/>
</dbReference>
<dbReference type="PDB" id="3EKT">
    <property type="method" value="X-ray"/>
    <property type="resolution" value="1.97 A"/>
    <property type="chains" value="A/B/C/D=491-589"/>
</dbReference>
<dbReference type="PDB" id="3EKV">
    <property type="method" value="X-ray"/>
    <property type="resolution" value="1.75 A"/>
    <property type="chains" value="A/B=491-589"/>
</dbReference>
<dbReference type="PDB" id="3EKW">
    <property type="method" value="X-ray"/>
    <property type="resolution" value="1.60 A"/>
    <property type="chains" value="A/B=491-589"/>
</dbReference>
<dbReference type="PDB" id="3EKX">
    <property type="method" value="X-ray"/>
    <property type="resolution" value="1.97 A"/>
    <property type="chains" value="A/B=491-589"/>
</dbReference>
<dbReference type="PDB" id="3EKY">
    <property type="method" value="X-ray"/>
    <property type="resolution" value="1.80 A"/>
    <property type="chains" value="A/B=491-589"/>
</dbReference>
<dbReference type="PDB" id="3EL0">
    <property type="method" value="X-ray"/>
    <property type="resolution" value="2.00 A"/>
    <property type="chains" value="A/B=491-589"/>
</dbReference>
<dbReference type="PDB" id="3EL1">
    <property type="method" value="X-ray"/>
    <property type="resolution" value="1.70 A"/>
    <property type="chains" value="A/B=491-589"/>
</dbReference>
<dbReference type="PDB" id="3EL4">
    <property type="method" value="X-ray"/>
    <property type="resolution" value="2.00 A"/>
    <property type="chains" value="A/B=491-589"/>
</dbReference>
<dbReference type="PDB" id="3EL5">
    <property type="method" value="X-ray"/>
    <property type="resolution" value="1.60 A"/>
    <property type="chains" value="A/B=491-589"/>
</dbReference>
<dbReference type="PDB" id="3EL9">
    <property type="method" value="X-ray"/>
    <property type="resolution" value="1.60 A"/>
    <property type="chains" value="A/B=491-589"/>
</dbReference>
<dbReference type="PDB" id="3EM3">
    <property type="method" value="X-ray"/>
    <property type="resolution" value="2.20 A"/>
    <property type="chains" value="A/B=491-589"/>
</dbReference>
<dbReference type="PDB" id="3EM4">
    <property type="method" value="X-ray"/>
    <property type="resolution" value="2.10 A"/>
    <property type="chains" value="A/B/U/V=491-589"/>
</dbReference>
<dbReference type="PDB" id="3EM6">
    <property type="method" value="X-ray"/>
    <property type="resolution" value="2.10 A"/>
    <property type="chains" value="A/B=491-589"/>
</dbReference>
<dbReference type="PDB" id="3FSM">
    <property type="method" value="X-ray"/>
    <property type="resolution" value="1.60 A"/>
    <property type="chains" value="A=491-589"/>
</dbReference>
<dbReference type="PDB" id="3GI0">
    <property type="method" value="X-ray"/>
    <property type="resolution" value="1.80 A"/>
    <property type="chains" value="A/B=491-589"/>
</dbReference>
<dbReference type="PDB" id="3GI4">
    <property type="method" value="X-ray"/>
    <property type="resolution" value="1.85 A"/>
    <property type="chains" value="A/B=491-589"/>
</dbReference>
<dbReference type="PDB" id="3GI5">
    <property type="method" value="X-ray"/>
    <property type="resolution" value="1.80 A"/>
    <property type="chains" value="A/B=491-589"/>
</dbReference>
<dbReference type="PDB" id="3GI6">
    <property type="method" value="X-ray"/>
    <property type="resolution" value="1.84 A"/>
    <property type="chains" value="A/B=491-589"/>
</dbReference>
<dbReference type="PDB" id="3HAU">
    <property type="method" value="X-ray"/>
    <property type="resolution" value="1.30 A"/>
    <property type="chains" value="A/B=491-589"/>
</dbReference>
<dbReference type="PDB" id="3HAW">
    <property type="method" value="X-ray"/>
    <property type="resolution" value="1.30 A"/>
    <property type="chains" value="A/B=491-589"/>
</dbReference>
<dbReference type="PDB" id="3HBO">
    <property type="method" value="X-ray"/>
    <property type="resolution" value="1.71 A"/>
    <property type="chains" value="A/B=491-589"/>
</dbReference>
<dbReference type="PDB" id="3HDK">
    <property type="method" value="X-ray"/>
    <property type="resolution" value="1.80 A"/>
    <property type="chains" value="A/B=491-589"/>
</dbReference>
<dbReference type="PDB" id="3HLO">
    <property type="method" value="X-ray"/>
    <property type="resolution" value="1.60 A"/>
    <property type="chains" value="A=491-589"/>
</dbReference>
<dbReference type="PDB" id="3HVP">
    <property type="method" value="X-ray"/>
    <property type="resolution" value="2.80 A"/>
    <property type="chains" value="A=491-589"/>
</dbReference>
<dbReference type="PDB" id="3HZC">
    <property type="method" value="X-ray"/>
    <property type="resolution" value="1.45 A"/>
    <property type="chains" value="A=491-589"/>
</dbReference>
<dbReference type="PDB" id="3I2L">
    <property type="method" value="X-ray"/>
    <property type="resolution" value="1.50 A"/>
    <property type="chains" value="A/B=491-589"/>
</dbReference>
<dbReference type="PDB" id="3I7E">
    <property type="method" value="X-ray"/>
    <property type="resolution" value="1.70 A"/>
    <property type="chains" value="A/B=491-589"/>
</dbReference>
<dbReference type="PDB" id="3IAW">
    <property type="method" value="X-ray"/>
    <property type="resolution" value="1.61 A"/>
    <property type="chains" value="A=491-589"/>
</dbReference>
<dbReference type="PDB" id="3KA2">
    <property type="method" value="X-ray"/>
    <property type="resolution" value="1.40 A"/>
    <property type="chains" value="A=491-589"/>
</dbReference>
<dbReference type="PDB" id="3LZV">
    <property type="method" value="X-ray"/>
    <property type="resolution" value="2.15 A"/>
    <property type="chains" value="A/B=491-589"/>
</dbReference>
<dbReference type="PDB" id="3MXD">
    <property type="method" value="X-ray"/>
    <property type="resolution" value="1.95 A"/>
    <property type="chains" value="A/B=491-589"/>
</dbReference>
<dbReference type="PDB" id="3MXE">
    <property type="method" value="X-ray"/>
    <property type="resolution" value="1.85 A"/>
    <property type="chains" value="A/B=491-589"/>
</dbReference>
<dbReference type="PDB" id="3NWQ">
    <property type="method" value="X-ray"/>
    <property type="resolution" value="1.50 A"/>
    <property type="chains" value="A/B=491-589"/>
</dbReference>
<dbReference type="PDB" id="3NWX">
    <property type="method" value="X-ray"/>
    <property type="resolution" value="1.90 A"/>
    <property type="chains" value="A/B=491-589"/>
</dbReference>
<dbReference type="PDB" id="3NXN">
    <property type="method" value="X-ray"/>
    <property type="resolution" value="1.80 A"/>
    <property type="chains" value="A=491-589"/>
</dbReference>
<dbReference type="PDB" id="3NYG">
    <property type="method" value="X-ray"/>
    <property type="resolution" value="1.45 A"/>
    <property type="chains" value="A/B=491-589"/>
</dbReference>
<dbReference type="PDB" id="3O9F">
    <property type="method" value="X-ray"/>
    <property type="resolution" value="1.70 A"/>
    <property type="chains" value="A/B=491-589"/>
</dbReference>
<dbReference type="PDB" id="3O9G">
    <property type="method" value="X-ray"/>
    <property type="resolution" value="1.65 A"/>
    <property type="chains" value="A/B=491-589"/>
</dbReference>
<dbReference type="PDB" id="3O9H">
    <property type="method" value="X-ray"/>
    <property type="resolution" value="1.70 A"/>
    <property type="chains" value="A/B=491-589"/>
</dbReference>
<dbReference type="PDB" id="3O9I">
    <property type="method" value="X-ray"/>
    <property type="resolution" value="1.45 A"/>
    <property type="chains" value="A/B=491-589"/>
</dbReference>
<dbReference type="PDB" id="3OXV">
    <property type="method" value="X-ray"/>
    <property type="resolution" value="1.75 A"/>
    <property type="chains" value="A/B/C/D=491-589"/>
</dbReference>
<dbReference type="PDB" id="3OXW">
    <property type="method" value="X-ray"/>
    <property type="resolution" value="1.95 A"/>
    <property type="chains" value="A/B/C/D=491-589"/>
</dbReference>
<dbReference type="PDB" id="3OXX">
    <property type="method" value="X-ray"/>
    <property type="resolution" value="1.65 A"/>
    <property type="chains" value="A/B/C/D=491-589"/>
</dbReference>
<dbReference type="PDB" id="3OY4">
    <property type="method" value="X-ray"/>
    <property type="resolution" value="1.76 A"/>
    <property type="chains" value="A/B=491-589"/>
</dbReference>
<dbReference type="PDB" id="3R4B">
    <property type="method" value="X-ray"/>
    <property type="resolution" value="1.90 A"/>
    <property type="chains" value="A/B=491-589"/>
</dbReference>
<dbReference type="PDB" id="4EP2">
    <property type="method" value="X-ray"/>
    <property type="resolution" value="1.90 A"/>
    <property type="chains" value="A=486-589"/>
</dbReference>
<dbReference type="PDB" id="4EP3">
    <property type="method" value="X-ray"/>
    <property type="resolution" value="1.81 A"/>
    <property type="chains" value="A=486-589"/>
</dbReference>
<dbReference type="PDB" id="4EPJ">
    <property type="method" value="X-ray"/>
    <property type="resolution" value="1.69 A"/>
    <property type="chains" value="A=486-589"/>
</dbReference>
<dbReference type="PDB" id="4EQ0">
    <property type="method" value="X-ray"/>
    <property type="resolution" value="1.70 A"/>
    <property type="chains" value="A=486-589"/>
</dbReference>
<dbReference type="PDB" id="4EQJ">
    <property type="method" value="X-ray"/>
    <property type="resolution" value="1.80 A"/>
    <property type="chains" value="A=486-589"/>
</dbReference>
<dbReference type="PDB" id="4F73">
    <property type="method" value="X-ray"/>
    <property type="resolution" value="1.90 A"/>
    <property type="chains" value="A/B=491-589"/>
</dbReference>
<dbReference type="PDB" id="4F74">
    <property type="method" value="X-ray"/>
    <property type="resolution" value="2.20 A"/>
    <property type="chains" value="A/B=491-589"/>
</dbReference>
<dbReference type="PDB" id="4F75">
    <property type="method" value="X-ray"/>
    <property type="resolution" value="1.70 A"/>
    <property type="chains" value="A/B=491-589"/>
</dbReference>
<dbReference type="PDB" id="4F76">
    <property type="method" value="X-ray"/>
    <property type="resolution" value="1.85 A"/>
    <property type="chains" value="A/B=491-589"/>
</dbReference>
<dbReference type="PDB" id="4HVP">
    <property type="method" value="X-ray"/>
    <property type="resolution" value="2.30 A"/>
    <property type="chains" value="A/B=491-589"/>
</dbReference>
<dbReference type="PDB" id="4OBD">
    <property type="method" value="X-ray"/>
    <property type="resolution" value="1.90 A"/>
    <property type="chains" value="A/B/C/D=491-589"/>
</dbReference>
<dbReference type="PDB" id="4OBF">
    <property type="method" value="X-ray"/>
    <property type="resolution" value="1.68 A"/>
    <property type="chains" value="A/B/C/D=491-589"/>
</dbReference>
<dbReference type="PDB" id="4OBG">
    <property type="method" value="X-ray"/>
    <property type="resolution" value="1.78 A"/>
    <property type="chains" value="A/B/C/D=491-589"/>
</dbReference>
<dbReference type="PDB" id="4OBH">
    <property type="method" value="X-ray"/>
    <property type="resolution" value="1.85 A"/>
    <property type="chains" value="A/B/C/D=491-589"/>
</dbReference>
<dbReference type="PDB" id="4OBJ">
    <property type="method" value="X-ray"/>
    <property type="resolution" value="1.75 A"/>
    <property type="chains" value="A/B=491-589"/>
</dbReference>
<dbReference type="PDB" id="4OBK">
    <property type="method" value="X-ray"/>
    <property type="resolution" value="1.65 A"/>
    <property type="chains" value="A/B=491-589"/>
</dbReference>
<dbReference type="PDB" id="4QJ2">
    <property type="method" value="X-ray"/>
    <property type="resolution" value="2.13 A"/>
    <property type="chains" value="A/B/C/D=491-589"/>
</dbReference>
<dbReference type="PDB" id="4QJ6">
    <property type="method" value="X-ray"/>
    <property type="resolution" value="1.50 A"/>
    <property type="chains" value="A/B/C/D=491-589"/>
</dbReference>
<dbReference type="PDB" id="4QJ7">
    <property type="method" value="X-ray"/>
    <property type="resolution" value="1.67 A"/>
    <property type="chains" value="A/B/C/D=491-589"/>
</dbReference>
<dbReference type="PDB" id="4QJ8">
    <property type="method" value="X-ray"/>
    <property type="resolution" value="2.00 A"/>
    <property type="chains" value="A/B/C/D=491-589"/>
</dbReference>
<dbReference type="PDB" id="4QJ9">
    <property type="method" value="X-ray"/>
    <property type="resolution" value="1.83 A"/>
    <property type="chains" value="A/B=491-589"/>
</dbReference>
<dbReference type="PDB" id="4QJA">
    <property type="method" value="X-ray"/>
    <property type="resolution" value="1.54 A"/>
    <property type="chains" value="A/B=491-589"/>
</dbReference>
<dbReference type="PDB" id="7HVP">
    <property type="method" value="X-ray"/>
    <property type="resolution" value="2.40 A"/>
    <property type="chains" value="A/B=491-589"/>
</dbReference>
<dbReference type="PDB" id="8HVP">
    <property type="method" value="X-ray"/>
    <property type="resolution" value="2.50 A"/>
    <property type="chains" value="A/B=491-589"/>
</dbReference>
<dbReference type="PDBsum" id="1AID"/>
<dbReference type="PDBsum" id="1B6J"/>
<dbReference type="PDBsum" id="1B6K"/>
<dbReference type="PDBsum" id="1B6L"/>
<dbReference type="PDBsum" id="1B6M"/>
<dbReference type="PDBsum" id="1B6P"/>
<dbReference type="PDBsum" id="1CPI"/>
<dbReference type="PDBsum" id="1D4K"/>
<dbReference type="PDBsum" id="1D4L"/>
<dbReference type="PDBsum" id="1F7A"/>
<dbReference type="PDBsum" id="1KJ4"/>
<dbReference type="PDBsum" id="1KJ7"/>
<dbReference type="PDBsum" id="1KJF"/>
<dbReference type="PDBsum" id="1KJG"/>
<dbReference type="PDBsum" id="1KJH"/>
<dbReference type="PDBsum" id="1KZK"/>
<dbReference type="PDBsum" id="1MT7"/>
<dbReference type="PDBsum" id="1MT8"/>
<dbReference type="PDBsum" id="1MT9"/>
<dbReference type="PDBsum" id="1MTB"/>
<dbReference type="PDBsum" id="1MTR"/>
<dbReference type="PDBsum" id="1N49"/>
<dbReference type="PDBsum" id="1T3R"/>
<dbReference type="PDBsum" id="1TSQ"/>
<dbReference type="PDBsum" id="1TSU"/>
<dbReference type="PDBsum" id="1YTG"/>
<dbReference type="PDBsum" id="1YTH"/>
<dbReference type="PDBsum" id="1Z1H"/>
<dbReference type="PDBsum" id="1Z1R"/>
<dbReference type="PDBsum" id="2AID"/>
<dbReference type="PDBsum" id="2F3K"/>
<dbReference type="PDBsum" id="2FGU"/>
<dbReference type="PDBsum" id="2FGV"/>
<dbReference type="PDBsum" id="2FNS"/>
<dbReference type="PDBsum" id="2FNT"/>
<dbReference type="PDBsum" id="2J9J"/>
<dbReference type="PDBsum" id="2J9K"/>
<dbReference type="PDBsum" id="2JE4"/>
<dbReference type="PDBsum" id="2NXD"/>
<dbReference type="PDBsum" id="2NXL"/>
<dbReference type="PDBsum" id="2NXM"/>
<dbReference type="PDBsum" id="2Q3K"/>
<dbReference type="PDBsum" id="2QHY"/>
<dbReference type="PDBsum" id="2QHZ"/>
<dbReference type="PDBsum" id="2QI0"/>
<dbReference type="PDBsum" id="2QI1"/>
<dbReference type="PDBsum" id="2QI3"/>
<dbReference type="PDBsum" id="2QI4"/>
<dbReference type="PDBsum" id="2QI5"/>
<dbReference type="PDBsum" id="2QI6"/>
<dbReference type="PDBsum" id="2QI7"/>
<dbReference type="PDBsum" id="3AID"/>
<dbReference type="PDBsum" id="3BXR"/>
<dbReference type="PDBsum" id="3BXS"/>
<dbReference type="PDBsum" id="3EKP"/>
<dbReference type="PDBsum" id="3EKQ"/>
<dbReference type="PDBsum" id="3EKT"/>
<dbReference type="PDBsum" id="3EKV"/>
<dbReference type="PDBsum" id="3EKW"/>
<dbReference type="PDBsum" id="3EKX"/>
<dbReference type="PDBsum" id="3EKY"/>
<dbReference type="PDBsum" id="3EL0"/>
<dbReference type="PDBsum" id="3EL1"/>
<dbReference type="PDBsum" id="3EL4"/>
<dbReference type="PDBsum" id="3EL5"/>
<dbReference type="PDBsum" id="3EL9"/>
<dbReference type="PDBsum" id="3EM3"/>
<dbReference type="PDBsum" id="3EM4"/>
<dbReference type="PDBsum" id="3EM6"/>
<dbReference type="PDBsum" id="3FSM"/>
<dbReference type="PDBsum" id="3GI0"/>
<dbReference type="PDBsum" id="3GI4"/>
<dbReference type="PDBsum" id="3GI5"/>
<dbReference type="PDBsum" id="3GI6"/>
<dbReference type="PDBsum" id="3HAU"/>
<dbReference type="PDBsum" id="3HAW"/>
<dbReference type="PDBsum" id="3HBO"/>
<dbReference type="PDBsum" id="3HDK"/>
<dbReference type="PDBsum" id="3HLO"/>
<dbReference type="PDBsum" id="3HVP"/>
<dbReference type="PDBsum" id="3HZC"/>
<dbReference type="PDBsum" id="3I2L"/>
<dbReference type="PDBsum" id="3I7E"/>
<dbReference type="PDBsum" id="3IAW"/>
<dbReference type="PDBsum" id="3KA2"/>
<dbReference type="PDBsum" id="3LZV"/>
<dbReference type="PDBsum" id="3MXD"/>
<dbReference type="PDBsum" id="3MXE"/>
<dbReference type="PDBsum" id="3NWQ"/>
<dbReference type="PDBsum" id="3NWX"/>
<dbReference type="PDBsum" id="3NXN"/>
<dbReference type="PDBsum" id="3NYG"/>
<dbReference type="PDBsum" id="3O9F"/>
<dbReference type="PDBsum" id="3O9G"/>
<dbReference type="PDBsum" id="3O9H"/>
<dbReference type="PDBsum" id="3O9I"/>
<dbReference type="PDBsum" id="3OXV"/>
<dbReference type="PDBsum" id="3OXW"/>
<dbReference type="PDBsum" id="3OXX"/>
<dbReference type="PDBsum" id="3OY4"/>
<dbReference type="PDBsum" id="3R4B"/>
<dbReference type="PDBsum" id="4EP2"/>
<dbReference type="PDBsum" id="4EP3"/>
<dbReference type="PDBsum" id="4EPJ"/>
<dbReference type="PDBsum" id="4EQ0"/>
<dbReference type="PDBsum" id="4EQJ"/>
<dbReference type="PDBsum" id="4F73"/>
<dbReference type="PDBsum" id="4F74"/>
<dbReference type="PDBsum" id="4F75"/>
<dbReference type="PDBsum" id="4F76"/>
<dbReference type="PDBsum" id="4HVP"/>
<dbReference type="PDBsum" id="4OBD"/>
<dbReference type="PDBsum" id="4OBF"/>
<dbReference type="PDBsum" id="4OBG"/>
<dbReference type="PDBsum" id="4OBH"/>
<dbReference type="PDBsum" id="4OBJ"/>
<dbReference type="PDBsum" id="4OBK"/>
<dbReference type="PDBsum" id="4QJ2"/>
<dbReference type="PDBsum" id="4QJ6"/>
<dbReference type="PDBsum" id="4QJ7"/>
<dbReference type="PDBsum" id="4QJ8"/>
<dbReference type="PDBsum" id="4QJ9"/>
<dbReference type="PDBsum" id="4QJA"/>
<dbReference type="PDBsum" id="7HVP"/>
<dbReference type="PDBsum" id="8HVP"/>
<dbReference type="SMR" id="P03369"/>
<dbReference type="BindingDB" id="P03369"/>
<dbReference type="ChEMBL" id="CHEMBL3638331"/>
<dbReference type="DrugBank" id="DB07910">
    <property type="generic name" value="(2S)-2-amino-3-phenylpropane-1,1-diol"/>
</dbReference>
<dbReference type="DrugBank" id="DB07679">
    <property type="generic name" value="(9S,12S)-9-(1-methylethyl)-7,10-dioxo-2-oxa-8,11-diazabicyclo[12.2.2]octadeca-1(16),14,17-triene-12-carboxylic acid"/>
</dbReference>
<dbReference type="DrugBank" id="DB02411">
    <property type="generic name" value="2-(11-{2-[Benzenesulfonyl-(3-Methyl-Butyl)-Amino]-1-Hydroxy-Ethyl}-6,9-Dioxo-2-Oxa-7,10-Diaza-Bicyclo[11.2.2]Heptadeca-1(16),13(17),14-Trien-8-Yl)-Acetamide, Inhibitor 2"/>
</dbReference>
<dbReference type="DrugBank" id="DB08622">
    <property type="generic name" value="4-(4-CHLORO-PHENYL)-1-{3-[2-(4-FLUORO-PHENYL)-[1,3]DITHIOLAN-2-YL]-PROPYL}-PIPERIDIN-4-OL"/>
</dbReference>
<dbReference type="DrugBank" id="DB04454">
    <property type="generic name" value="Alpha-Aminobutyric Acid"/>
</dbReference>
<dbReference type="DrugBank" id="DB04886">
    <property type="generic name" value="Calanolide A"/>
</dbReference>
<dbReference type="DrugBank" id="DB02668">
    <property type="generic name" value="JE-2147"/>
</dbReference>
<dbReference type="DrugBank" id="DB05644">
    <property type="generic name" value="KP-1461"/>
</dbReference>
<dbReference type="DrugBank" id="DB03768">
    <property type="generic name" value="N-[2-Hydroxy-2-(8-Isopropyl-6,9-Dioxo-2-Oxa-7,10-Diaza-Bicyclo[11.2.2]Heptadeca-1(16),13(17),14-Trien-11-Yl)-Ethyl]-N-(3-Methyl-Butyl)-Benzenesulfonamide,Inhibitor 3"/>
</dbReference>
<dbReference type="DrugBank" id="DB05228">
    <property type="generic name" value="RDEA806"/>
</dbReference>
<dbReference type="DrugCentral" id="P03369"/>
<dbReference type="MEROPS" id="A02.001"/>
<dbReference type="EvolutionaryTrace" id="P03369"/>
<dbReference type="PRO" id="PR:P03369"/>
<dbReference type="Proteomes" id="UP000007688">
    <property type="component" value="Genome"/>
</dbReference>
<dbReference type="GO" id="GO:0043657">
    <property type="term" value="C:host cell"/>
    <property type="evidence" value="ECO:0007669"/>
    <property type="project" value="GOC"/>
</dbReference>
<dbReference type="GO" id="GO:0042025">
    <property type="term" value="C:host cell nucleus"/>
    <property type="evidence" value="ECO:0007669"/>
    <property type="project" value="UniProtKB-SubCell"/>
</dbReference>
<dbReference type="GO" id="GO:0020002">
    <property type="term" value="C:host cell plasma membrane"/>
    <property type="evidence" value="ECO:0007669"/>
    <property type="project" value="UniProtKB-SubCell"/>
</dbReference>
<dbReference type="GO" id="GO:0072494">
    <property type="term" value="C:host multivesicular body"/>
    <property type="evidence" value="ECO:0007669"/>
    <property type="project" value="UniProtKB-SubCell"/>
</dbReference>
<dbReference type="GO" id="GO:0016020">
    <property type="term" value="C:membrane"/>
    <property type="evidence" value="ECO:0007669"/>
    <property type="project" value="UniProtKB-KW"/>
</dbReference>
<dbReference type="GO" id="GO:0019013">
    <property type="term" value="C:viral nucleocapsid"/>
    <property type="evidence" value="ECO:0007669"/>
    <property type="project" value="UniProtKB-KW"/>
</dbReference>
<dbReference type="GO" id="GO:0055036">
    <property type="term" value="C:virion membrane"/>
    <property type="evidence" value="ECO:0007669"/>
    <property type="project" value="UniProtKB-SubCell"/>
</dbReference>
<dbReference type="GO" id="GO:0004190">
    <property type="term" value="F:aspartic-type endopeptidase activity"/>
    <property type="evidence" value="ECO:0007669"/>
    <property type="project" value="UniProtKB-KW"/>
</dbReference>
<dbReference type="GO" id="GO:0003677">
    <property type="term" value="F:DNA binding"/>
    <property type="evidence" value="ECO:0007669"/>
    <property type="project" value="UniProtKB-KW"/>
</dbReference>
<dbReference type="GO" id="GO:0003887">
    <property type="term" value="F:DNA-directed DNA polymerase activity"/>
    <property type="evidence" value="ECO:0007669"/>
    <property type="project" value="UniProtKB-KW"/>
</dbReference>
<dbReference type="GO" id="GO:0004533">
    <property type="term" value="F:exoribonuclease H activity"/>
    <property type="evidence" value="ECO:0007669"/>
    <property type="project" value="UniProtKB-EC"/>
</dbReference>
<dbReference type="GO" id="GO:0008289">
    <property type="term" value="F:lipid binding"/>
    <property type="evidence" value="ECO:0007669"/>
    <property type="project" value="UniProtKB-KW"/>
</dbReference>
<dbReference type="GO" id="GO:0035613">
    <property type="term" value="F:RNA stem-loop binding"/>
    <property type="evidence" value="ECO:0007669"/>
    <property type="project" value="TreeGrafter"/>
</dbReference>
<dbReference type="GO" id="GO:0003964">
    <property type="term" value="F:RNA-directed DNA polymerase activity"/>
    <property type="evidence" value="ECO:0007669"/>
    <property type="project" value="UniProtKB-KW"/>
</dbReference>
<dbReference type="GO" id="GO:0004523">
    <property type="term" value="F:RNA-DNA hybrid ribonuclease activity"/>
    <property type="evidence" value="ECO:0007669"/>
    <property type="project" value="InterPro"/>
</dbReference>
<dbReference type="GO" id="GO:0005198">
    <property type="term" value="F:structural molecule activity"/>
    <property type="evidence" value="ECO:0007669"/>
    <property type="project" value="InterPro"/>
</dbReference>
<dbReference type="GO" id="GO:0008270">
    <property type="term" value="F:zinc ion binding"/>
    <property type="evidence" value="ECO:0007669"/>
    <property type="project" value="UniProtKB-KW"/>
</dbReference>
<dbReference type="GO" id="GO:0015074">
    <property type="term" value="P:DNA integration"/>
    <property type="evidence" value="ECO:0007669"/>
    <property type="project" value="UniProtKB-KW"/>
</dbReference>
<dbReference type="GO" id="GO:0006310">
    <property type="term" value="P:DNA recombination"/>
    <property type="evidence" value="ECO:0007669"/>
    <property type="project" value="UniProtKB-KW"/>
</dbReference>
<dbReference type="GO" id="GO:0075713">
    <property type="term" value="P:establishment of integrated proviral latency"/>
    <property type="evidence" value="ECO:0007669"/>
    <property type="project" value="UniProtKB-KW"/>
</dbReference>
<dbReference type="GO" id="GO:0006508">
    <property type="term" value="P:proteolysis"/>
    <property type="evidence" value="ECO:0007669"/>
    <property type="project" value="UniProtKB-KW"/>
</dbReference>
<dbReference type="GO" id="GO:0046718">
    <property type="term" value="P:symbiont entry into host cell"/>
    <property type="evidence" value="ECO:0007669"/>
    <property type="project" value="UniProtKB-KW"/>
</dbReference>
<dbReference type="GO" id="GO:0052151">
    <property type="term" value="P:symbiont-mediated activation of host apoptosis"/>
    <property type="evidence" value="ECO:0007669"/>
    <property type="project" value="UniProtKB-KW"/>
</dbReference>
<dbReference type="GO" id="GO:0039657">
    <property type="term" value="P:symbiont-mediated suppression of host gene expression"/>
    <property type="evidence" value="ECO:0007669"/>
    <property type="project" value="UniProtKB-KW"/>
</dbReference>
<dbReference type="GO" id="GO:0044826">
    <property type="term" value="P:viral genome integration into host DNA"/>
    <property type="evidence" value="ECO:0007669"/>
    <property type="project" value="UniProtKB-KW"/>
</dbReference>
<dbReference type="GO" id="GO:0075732">
    <property type="term" value="P:viral penetration into host nucleus"/>
    <property type="evidence" value="ECO:0007669"/>
    <property type="project" value="UniProtKB-KW"/>
</dbReference>
<dbReference type="GO" id="GO:0075523">
    <property type="term" value="P:viral translational frameshifting"/>
    <property type="evidence" value="ECO:0007669"/>
    <property type="project" value="UniProtKB-KW"/>
</dbReference>
<dbReference type="CDD" id="cd05482">
    <property type="entry name" value="HIV_retropepsin_like"/>
    <property type="match status" value="1"/>
</dbReference>
<dbReference type="CDD" id="cd01645">
    <property type="entry name" value="RT_Rtv"/>
    <property type="match status" value="1"/>
</dbReference>
<dbReference type="FunFam" id="1.10.1200.30:FF:000001">
    <property type="entry name" value="Gag polyprotein"/>
    <property type="match status" value="1"/>
</dbReference>
<dbReference type="FunFam" id="1.10.150.90:FF:000001">
    <property type="entry name" value="Gag polyprotein"/>
    <property type="match status" value="1"/>
</dbReference>
<dbReference type="FunFam" id="1.10.375.10:FF:000001">
    <property type="entry name" value="Gag polyprotein"/>
    <property type="match status" value="1"/>
</dbReference>
<dbReference type="FunFam" id="4.10.60.10:FF:000001">
    <property type="entry name" value="Gag polyprotein"/>
    <property type="match status" value="1"/>
</dbReference>
<dbReference type="FunFam" id="2.40.70.10:FF:000001">
    <property type="entry name" value="Gag-Pol polyprotein"/>
    <property type="match status" value="1"/>
</dbReference>
<dbReference type="FunFam" id="3.30.420.10:FF:000025">
    <property type="entry name" value="Gag-Pol polyprotein"/>
    <property type="match status" value="1"/>
</dbReference>
<dbReference type="FunFam" id="2.30.30.10:FF:000001">
    <property type="entry name" value="POL polyprotein"/>
    <property type="match status" value="1"/>
</dbReference>
<dbReference type="FunFam" id="3.30.420.10:FF:000017">
    <property type="entry name" value="POL polyprotein"/>
    <property type="match status" value="1"/>
</dbReference>
<dbReference type="FunFam" id="3.30.70.270:FF:000016">
    <property type="entry name" value="POL polyprotein"/>
    <property type="match status" value="1"/>
</dbReference>
<dbReference type="Gene3D" id="1.10.10.200">
    <property type="match status" value="1"/>
</dbReference>
<dbReference type="Gene3D" id="1.10.1200.30">
    <property type="match status" value="1"/>
</dbReference>
<dbReference type="Gene3D" id="3.30.70.270">
    <property type="match status" value="3"/>
</dbReference>
<dbReference type="Gene3D" id="2.40.70.10">
    <property type="entry name" value="Acid Proteases"/>
    <property type="match status" value="1"/>
</dbReference>
<dbReference type="Gene3D" id="3.10.10.10">
    <property type="entry name" value="HIV Type 1 Reverse Transcriptase, subunit A, domain 1"/>
    <property type="match status" value="1"/>
</dbReference>
<dbReference type="Gene3D" id="1.10.375.10">
    <property type="entry name" value="Human Immunodeficiency Virus Type 1 Capsid Protein"/>
    <property type="match status" value="1"/>
</dbReference>
<dbReference type="Gene3D" id="1.10.150.90">
    <property type="entry name" value="Immunodeficiency lentiviruses, gag gene matrix protein p17"/>
    <property type="match status" value="1"/>
</dbReference>
<dbReference type="Gene3D" id="2.30.30.10">
    <property type="entry name" value="Integrase, C-terminal domain superfamily, retroviral"/>
    <property type="match status" value="1"/>
</dbReference>
<dbReference type="Gene3D" id="3.30.420.10">
    <property type="entry name" value="Ribonuclease H-like superfamily/Ribonuclease H"/>
    <property type="match status" value="2"/>
</dbReference>
<dbReference type="Gene3D" id="1.20.5.760">
    <property type="entry name" value="Single helix bin"/>
    <property type="match status" value="1"/>
</dbReference>
<dbReference type="Gene3D" id="4.10.60.10">
    <property type="entry name" value="Zinc finger, CCHC-type"/>
    <property type="match status" value="1"/>
</dbReference>
<dbReference type="InterPro" id="IPR001969">
    <property type="entry name" value="Aspartic_peptidase_AS"/>
</dbReference>
<dbReference type="InterPro" id="IPR043502">
    <property type="entry name" value="DNA/RNA_pol_sf"/>
</dbReference>
<dbReference type="InterPro" id="IPR045345">
    <property type="entry name" value="Gag_p24_C"/>
</dbReference>
<dbReference type="InterPro" id="IPR017856">
    <property type="entry name" value="Integrase-like_N"/>
</dbReference>
<dbReference type="InterPro" id="IPR036862">
    <property type="entry name" value="Integrase_C_dom_sf_retrovir"/>
</dbReference>
<dbReference type="InterPro" id="IPR001037">
    <property type="entry name" value="Integrase_C_retrovir"/>
</dbReference>
<dbReference type="InterPro" id="IPR001584">
    <property type="entry name" value="Integrase_cat-core"/>
</dbReference>
<dbReference type="InterPro" id="IPR003308">
    <property type="entry name" value="Integrase_Zn-bd_dom_N"/>
</dbReference>
<dbReference type="InterPro" id="IPR000071">
    <property type="entry name" value="Lentvrl_matrix_N"/>
</dbReference>
<dbReference type="InterPro" id="IPR012344">
    <property type="entry name" value="Matrix_HIV/RSV_N"/>
</dbReference>
<dbReference type="InterPro" id="IPR001995">
    <property type="entry name" value="Peptidase_A2_cat"/>
</dbReference>
<dbReference type="InterPro" id="IPR021109">
    <property type="entry name" value="Peptidase_aspartic_dom_sf"/>
</dbReference>
<dbReference type="InterPro" id="IPR034170">
    <property type="entry name" value="Retropepsin-like_cat_dom"/>
</dbReference>
<dbReference type="InterPro" id="IPR018061">
    <property type="entry name" value="Retropepsins"/>
</dbReference>
<dbReference type="InterPro" id="IPR008916">
    <property type="entry name" value="Retrov_capsid_C"/>
</dbReference>
<dbReference type="InterPro" id="IPR008919">
    <property type="entry name" value="Retrov_capsid_N"/>
</dbReference>
<dbReference type="InterPro" id="IPR010999">
    <property type="entry name" value="Retrovr_matrix"/>
</dbReference>
<dbReference type="InterPro" id="IPR043128">
    <property type="entry name" value="Rev_trsase/Diguanyl_cyclase"/>
</dbReference>
<dbReference type="InterPro" id="IPR012337">
    <property type="entry name" value="RNaseH-like_sf"/>
</dbReference>
<dbReference type="InterPro" id="IPR002156">
    <property type="entry name" value="RNaseH_domain"/>
</dbReference>
<dbReference type="InterPro" id="IPR036397">
    <property type="entry name" value="RNaseH_sf"/>
</dbReference>
<dbReference type="InterPro" id="IPR000477">
    <property type="entry name" value="RT_dom"/>
</dbReference>
<dbReference type="InterPro" id="IPR010659">
    <property type="entry name" value="RVT_connect"/>
</dbReference>
<dbReference type="InterPro" id="IPR010661">
    <property type="entry name" value="RVT_thumb"/>
</dbReference>
<dbReference type="InterPro" id="IPR001878">
    <property type="entry name" value="Znf_CCHC"/>
</dbReference>
<dbReference type="InterPro" id="IPR036875">
    <property type="entry name" value="Znf_CCHC_sf"/>
</dbReference>
<dbReference type="PANTHER" id="PTHR41694">
    <property type="entry name" value="ENDOGENOUS RETROVIRUS GROUP K MEMBER POL PROTEIN"/>
    <property type="match status" value="1"/>
</dbReference>
<dbReference type="PANTHER" id="PTHR41694:SF3">
    <property type="entry name" value="RNA-DIRECTED DNA POLYMERASE-RELATED"/>
    <property type="match status" value="1"/>
</dbReference>
<dbReference type="Pfam" id="PF00540">
    <property type="entry name" value="Gag_p17"/>
    <property type="match status" value="1"/>
</dbReference>
<dbReference type="Pfam" id="PF19317">
    <property type="entry name" value="Gag_p24_C"/>
    <property type="match status" value="1"/>
</dbReference>
<dbReference type="Pfam" id="PF00552">
    <property type="entry name" value="IN_DBD_C"/>
    <property type="match status" value="1"/>
</dbReference>
<dbReference type="Pfam" id="PF02022">
    <property type="entry name" value="Integrase_Zn"/>
    <property type="match status" value="1"/>
</dbReference>
<dbReference type="Pfam" id="PF00075">
    <property type="entry name" value="RNase_H"/>
    <property type="match status" value="1"/>
</dbReference>
<dbReference type="Pfam" id="PF00665">
    <property type="entry name" value="rve"/>
    <property type="match status" value="1"/>
</dbReference>
<dbReference type="Pfam" id="PF00077">
    <property type="entry name" value="RVP"/>
    <property type="match status" value="1"/>
</dbReference>
<dbReference type="Pfam" id="PF00078">
    <property type="entry name" value="RVT_1"/>
    <property type="match status" value="1"/>
</dbReference>
<dbReference type="Pfam" id="PF06815">
    <property type="entry name" value="RVT_connect"/>
    <property type="match status" value="1"/>
</dbReference>
<dbReference type="Pfam" id="PF06817">
    <property type="entry name" value="RVT_thumb"/>
    <property type="match status" value="1"/>
</dbReference>
<dbReference type="Pfam" id="PF00098">
    <property type="entry name" value="zf-CCHC"/>
    <property type="match status" value="2"/>
</dbReference>
<dbReference type="PRINTS" id="PR00234">
    <property type="entry name" value="HIV1MATRIX"/>
</dbReference>
<dbReference type="SMART" id="SM00343">
    <property type="entry name" value="ZnF_C2HC"/>
    <property type="match status" value="2"/>
</dbReference>
<dbReference type="SUPFAM" id="SSF50630">
    <property type="entry name" value="Acid proteases"/>
    <property type="match status" value="1"/>
</dbReference>
<dbReference type="SUPFAM" id="SSF50122">
    <property type="entry name" value="DNA-binding domain of retroviral integrase"/>
    <property type="match status" value="1"/>
</dbReference>
<dbReference type="SUPFAM" id="SSF56672">
    <property type="entry name" value="DNA/RNA polymerases"/>
    <property type="match status" value="1"/>
</dbReference>
<dbReference type="SUPFAM" id="SSF46919">
    <property type="entry name" value="N-terminal Zn binding domain of HIV integrase"/>
    <property type="match status" value="1"/>
</dbReference>
<dbReference type="SUPFAM" id="SSF47836">
    <property type="entry name" value="Retroviral matrix proteins"/>
    <property type="match status" value="1"/>
</dbReference>
<dbReference type="SUPFAM" id="SSF47353">
    <property type="entry name" value="Retrovirus capsid dimerization domain-like"/>
    <property type="match status" value="1"/>
</dbReference>
<dbReference type="SUPFAM" id="SSF47943">
    <property type="entry name" value="Retrovirus capsid protein, N-terminal core domain"/>
    <property type="match status" value="1"/>
</dbReference>
<dbReference type="SUPFAM" id="SSF57756">
    <property type="entry name" value="Retrovirus zinc finger-like domains"/>
    <property type="match status" value="1"/>
</dbReference>
<dbReference type="SUPFAM" id="SSF53098">
    <property type="entry name" value="Ribonuclease H-like"/>
    <property type="match status" value="2"/>
</dbReference>
<dbReference type="PROSITE" id="PS50175">
    <property type="entry name" value="ASP_PROT_RETROV"/>
    <property type="match status" value="1"/>
</dbReference>
<dbReference type="PROSITE" id="PS00141">
    <property type="entry name" value="ASP_PROTEASE"/>
    <property type="match status" value="1"/>
</dbReference>
<dbReference type="PROSITE" id="PS50994">
    <property type="entry name" value="INTEGRASE"/>
    <property type="match status" value="1"/>
</dbReference>
<dbReference type="PROSITE" id="PS51027">
    <property type="entry name" value="INTEGRASE_DBD"/>
    <property type="match status" value="1"/>
</dbReference>
<dbReference type="PROSITE" id="PS50879">
    <property type="entry name" value="RNASE_H_1"/>
    <property type="match status" value="1"/>
</dbReference>
<dbReference type="PROSITE" id="PS50878">
    <property type="entry name" value="RT_POL"/>
    <property type="match status" value="1"/>
</dbReference>
<dbReference type="PROSITE" id="PS50158">
    <property type="entry name" value="ZF_CCHC"/>
    <property type="match status" value="2"/>
</dbReference>
<dbReference type="PROSITE" id="PS50876">
    <property type="entry name" value="ZF_INTEGRASE"/>
    <property type="match status" value="1"/>
</dbReference>
<reference key="1">
    <citation type="journal article" date="1985" name="Science">
        <title>Nucleotide sequence and expression of an AIDS-associated retrovirus (ARV-2).</title>
        <authorList>
            <person name="Sanchez-Pescador R."/>
            <person name="Power M.D."/>
            <person name="Barr P.J."/>
            <person name="Steimer K.S."/>
            <person name="Stempien M.M."/>
            <person name="Brown-Shimer S.L."/>
            <person name="Gee W.W."/>
            <person name="Renard A."/>
            <person name="Randolph A."/>
            <person name="Levy J.A."/>
            <person name="Dina D."/>
            <person name="Luciw P.A."/>
        </authorList>
    </citation>
    <scope>NUCLEOTIDE SEQUENCE</scope>
</reference>
<reference key="2">
    <citation type="journal article" date="1988" name="Nature">
        <title>Characterization of ribosomal frameshifting in HIV-1 gag-pol expression.</title>
        <authorList>
            <person name="Jacks T."/>
            <person name="Power M.D."/>
            <person name="Masiarz F.R."/>
            <person name="Luciw P.A."/>
            <person name="Barr P.J."/>
            <person name="Varmus H.E."/>
        </authorList>
    </citation>
    <scope>RIBOSOMAL FRAMESHIFT</scope>
</reference>
<reference key="3">
    <citation type="journal article" date="1996" name="Curr. Top. Microbiol. Immunol.">
        <title>Proteolytic processing and particle maturation.</title>
        <authorList>
            <person name="Vogt V.M."/>
        </authorList>
    </citation>
    <scope>REVIEW</scope>
</reference>
<reference key="4">
    <citation type="journal article" date="1999" name="J. Mol. Biol.">
        <title>Structural biology of HIV.</title>
        <authorList>
            <person name="Turner B.G."/>
            <person name="Summers M.F."/>
        </authorList>
    </citation>
    <scope>REVIEW</scope>
</reference>
<reference key="5">
    <citation type="journal article" date="2001" name="Annu. Rev. Genet.">
        <title>Mechanisms of retroviral recombination.</title>
        <authorList>
            <person name="Negroni M."/>
            <person name="Buc H."/>
        </authorList>
    </citation>
    <scope>REVIEW</scope>
</reference>
<reference key="6">
    <citation type="journal article" date="2002" name="Genome Biol.">
        <title>Retroviral proteases.</title>
        <authorList>
            <person name="Dunn B.M."/>
            <person name="Goodenow M.M."/>
            <person name="Gustchina A."/>
            <person name="Wlodawer A."/>
        </authorList>
    </citation>
    <scope>REVIEW</scope>
</reference>
<reference key="7">
    <citation type="journal article" date="2003" name="Biochim. Biophys. Acta">
        <title>Role of HIV-1 Gag domains in viral assembly.</title>
        <authorList>
            <person name="Scarlata S."/>
            <person name="Carter C."/>
        </authorList>
    </citation>
    <scope>REVIEW</scope>
</reference>
<reference key="8">
    <citation type="journal article" date="1989" name="Science">
        <title>Conserved folding in retroviral proteases: crystal structure of a synthetic HIV-1 protease.</title>
        <authorList>
            <person name="Wlodawer A."/>
            <person name="Miller M."/>
            <person name="Jaskolski M."/>
            <person name="Sathyanarayana B.K."/>
            <person name="Baldwin E."/>
            <person name="Weber I.T."/>
            <person name="Selk L.M."/>
            <person name="Clawson L."/>
            <person name="Schneider J."/>
            <person name="Kent S.B.H."/>
        </authorList>
    </citation>
    <scope>X-RAY CRYSTALLOGRAPHY (2.8 ANGSTROMS) OF 491-589</scope>
</reference>
<reference key="9">
    <citation type="journal article" date="1993" name="J. Biol. Chem.">
        <title>Structure of a non-peptide inhibitor complexed with HIV-1 protease. Developing a cycle of structure-based drug design.</title>
        <authorList>
            <person name="Rutenber E.E."/>
            <person name="Fauman E.B."/>
            <person name="Keenan R.J."/>
            <person name="Fong S."/>
            <person name="Furth P.S."/>
            <person name="Ortiz de Montellano P.R."/>
            <person name="Meng E."/>
            <person name="Kuntz I.D."/>
            <person name="DeCamp D.L."/>
            <person name="Salto R."/>
            <person name="Rose J.R."/>
            <person name="Craik C.S."/>
            <person name="Stroud R.M."/>
        </authorList>
    </citation>
    <scope>X-RAY CRYSTALLOGRAPHY (1.9 ANGSTROMS) OF 491-589 IN COMPLEX WITH HALOPERIDOL</scope>
</reference>
<reference key="10">
    <citation type="journal article" date="1995" name="J. Am. Chem. Soc.">
        <title>Regioselective structural and functional mimicry of peptides --design of hydrolytically-stable cyclic peptidomimetic inhibitors of HIV-1 protease.</title>
        <authorList>
            <person name="Abbenante G."/>
            <person name="March D.R."/>
            <person name="Bergman D.A."/>
            <person name="Hunt P.A."/>
            <person name="Garnham B."/>
            <person name="Dancer R.J."/>
            <person name="Martin J.L."/>
            <person name="Fairlie D.P."/>
        </authorList>
    </citation>
    <scope>X-RAY CRYSTALLOGRAPHY (2.05 ANGSTROMS) OF 491-589 OF COMPLEX WITH INH</scope>
</reference>
<reference key="11">
    <citation type="journal article" date="1996" name="J. Am. Chem. Soc.">
        <title>Substrate-based cyclic peptidomimetics of Phe-Ile-Val that inhibit HIV-1 protease using a novel enzyme-binding mode.</title>
        <authorList>
            <person name="March D.R."/>
            <person name="Abbenante G."/>
            <person name="Bergman D.A."/>
            <person name="Brinkworth R.I."/>
            <person name="Wickramasinghe W.A."/>
            <person name="Begun J."/>
            <person name="Martin J.L."/>
            <person name="Fairlie D.P."/>
        </authorList>
    </citation>
    <scope>X-RAY CRYSTALLOGRAPHY (1.75 ANGSTROMS) OF 491-589 OF COMPLEX WITH INH</scope>
</reference>
<reference key="12">
    <citation type="journal article" date="1996" name="Biochemistry">
        <title>Three-dimensional structures of HIV-1 and SIV protease product complexes.</title>
        <authorList>
            <person name="Rose R.B."/>
            <person name="Craik C.S."/>
            <person name="Douglas N.L."/>
            <person name="Stroud R.M."/>
        </authorList>
    </citation>
    <scope>X-RAY CRYSTALLOGRAPHY (2.3 ANGSTROMS) OF 491-589</scope>
</reference>
<reference key="13">
    <citation type="journal article" date="1996" name="Bioorg. Med. Chem.">
        <title>A new class of HIV-1 protease inhibitor: the crystallographic structure, inhibition and chemical synthesis of an aminimide peptide isostere.</title>
        <authorList>
            <person name="Rutenber E.E."/>
            <person name="McPhee F."/>
            <person name="Kaplan A.P."/>
            <person name="Gallion S.L."/>
            <person name="Hogan J.C. Jr."/>
            <person name="Craik C.S."/>
            <person name="Stroud R.M."/>
        </authorList>
    </citation>
    <scope>X-RAY CRYSTALLOGRAPHY (2.5 ANGSTROMS) OF 491-589</scope>
</reference>
<reference key="14">
    <citation type="journal article" date="1999" name="Biochemistry">
        <title>Molecular recognition of macrocyclic peptidomimetic inhibitors by HIV-1 protease.</title>
        <authorList>
            <person name="Martin J.L."/>
            <person name="Begun J."/>
            <person name="Schindeler A."/>
            <person name="Wickramasinghe W.A."/>
            <person name="Alewood D."/>
            <person name="Alewood P.F."/>
            <person name="Bergman D.A."/>
            <person name="Brinkworth R.I."/>
            <person name="Abbenante G."/>
            <person name="March D.R."/>
            <person name="Reid R.C."/>
            <person name="Fairlie D.P."/>
        </authorList>
    </citation>
    <scope>X-RAY CRYSTALLOGRAPHY (1.85 ANGSTROMS) OF 491-589 IN COMPLEX WITH MACROCYCLIC PEPTIDOMIMETIC INHIBITORS</scope>
</reference>
<reference key="15">
    <citation type="journal article" date="1999" name="J. Med. Chem.">
        <title>Structure-activity relationship of small-sized HIV protease inhibitors containing allophenylnorstatine.</title>
        <authorList>
            <person name="Mimoto T."/>
            <person name="Kato R."/>
            <person name="Takaku H."/>
            <person name="Nojima S."/>
            <person name="Terashima K."/>
            <person name="Misawa S."/>
            <person name="Fukazawa T."/>
            <person name="Ueno T."/>
            <person name="Sato H."/>
            <person name="Shintani M."/>
            <person name="Kiso Y."/>
            <person name="Hayashi H."/>
        </authorList>
    </citation>
    <scope>X-RAY CRYSTALLOGRAPHY (1.09 ANGSTROMS) OF 491-589 IN COMPLEX WITH THE INHIBITOR JE-2147</scope>
</reference>
<reference key="16">
    <citation type="journal article" date="2000" name="J. Med. Chem.">
        <title>Synthesis, stability, antiviral activity, and protease-bound structures of substrate-mimicking constrained macrocyclic inhibitors of HIV-1 protease.</title>
        <authorList>
            <person name="Tyndall J.D."/>
            <person name="Reid R.C."/>
            <person name="Tyssen D.P."/>
            <person name="Jardine D.K."/>
            <person name="Todd B."/>
            <person name="Passmore M."/>
            <person name="March D.R."/>
            <person name="Pattenden L.K."/>
            <person name="Bergman D.A."/>
            <person name="Alewood D."/>
            <person name="Hu S.H."/>
            <person name="Alewood P.F."/>
            <person name="Birch C.J."/>
            <person name="Martin J.L."/>
            <person name="Fairlie D.P."/>
        </authorList>
    </citation>
    <scope>X-RAY CRYSTALLOGRAPHY (1.85 ANGSTROMS) OF 491-589 IN COMPLEX WITH MACROCYCLIC PEPTIDOMIMETIC INHIBITORS</scope>
</reference>
<reference key="17">
    <citation type="journal article" date="2000" name="J. Mol. Biol.">
        <title>How does a symmetric dimer recognize an asymmetric substrate? A substrate complex of HIV-1 protease.</title>
        <authorList>
            <person name="Prabu-Jeyabalan M."/>
            <person name="Nalivaika E.A."/>
            <person name="Schiffer C.A."/>
        </authorList>
    </citation>
    <scope>X-RAY CRYSTALLOGRAPHY (1.9 ANGSTROMS) OF 491-589 IN COMPLEX WITH SUBSTRATE</scope>
</reference>
<reference key="18">
    <citation type="journal article" date="2002" name="Structure">
        <title>Substrate shape determines specificity of recognition for HIV-1 protease: analysis of crystal structures of six substrate complexes.</title>
        <authorList>
            <person name="Prabu-Jeyabalan M."/>
            <person name="Nalivaika E.A."/>
            <person name="Schiffer C.A."/>
        </authorList>
    </citation>
    <scope>X-RAY CRYSTALLOGRAPHY (2.9 ANGSTROMS) OF 491-589 IN COMPLEX WITH SUBSTRATES</scope>
</reference>
<gene>
    <name type="primary">gag-pol</name>
</gene>
<organismHost>
    <name type="scientific">Homo sapiens</name>
    <name type="common">Human</name>
    <dbReference type="NCBI Taxonomy" id="9606"/>
</organismHost>
<proteinExistence type="evidence at protein level"/>
<keyword id="KW-0002">3D-structure</keyword>
<keyword id="KW-1073">Activation of host caspases by virus</keyword>
<keyword id="KW-0014">AIDS</keyword>
<keyword id="KW-0064">Aspartyl protease</keyword>
<keyword id="KW-0167">Capsid protein</keyword>
<keyword id="KW-0229">DNA integration</keyword>
<keyword id="KW-0233">DNA recombination</keyword>
<keyword id="KW-0238">DNA-binding</keyword>
<keyword id="KW-0239">DNA-directed DNA polymerase</keyword>
<keyword id="KW-0255">Endonuclease</keyword>
<keyword id="KW-1262">Eukaryotic host gene expression shutoff by virus</keyword>
<keyword id="KW-1193">Eukaryotic host translation shutoff by virus</keyword>
<keyword id="KW-1032">Host cell membrane</keyword>
<keyword id="KW-1035">Host cytoplasm</keyword>
<keyword id="KW-1039">Host endosome</keyword>
<keyword id="KW-1190">Host gene expression shutoff by virus</keyword>
<keyword id="KW-1043">Host membrane</keyword>
<keyword id="KW-1048">Host nucleus</keyword>
<keyword id="KW-0945">Host-virus interaction</keyword>
<keyword id="KW-0378">Hydrolase</keyword>
<keyword id="KW-0446">Lipid-binding</keyword>
<keyword id="KW-0449">Lipoprotein</keyword>
<keyword id="KW-0460">Magnesium</keyword>
<keyword id="KW-0472">Membrane</keyword>
<keyword id="KW-0479">Metal-binding</keyword>
<keyword id="KW-1119">Modulation of host cell apoptosis by virus</keyword>
<keyword id="KW-0511">Multifunctional enzyme</keyword>
<keyword id="KW-0519">Myristate</keyword>
<keyword id="KW-0540">Nuclease</keyword>
<keyword id="KW-0548">Nucleotidyltransferase</keyword>
<keyword id="KW-0597">Phosphoprotein</keyword>
<keyword id="KW-0645">Protease</keyword>
<keyword id="KW-1185">Reference proteome</keyword>
<keyword id="KW-0677">Repeat</keyword>
<keyword id="KW-0688">Ribosomal frameshifting</keyword>
<keyword id="KW-0694">RNA-binding</keyword>
<keyword id="KW-0695">RNA-directed DNA polymerase</keyword>
<keyword id="KW-0808">Transferase</keyword>
<keyword id="KW-1179">Viral genome integration</keyword>
<keyword id="KW-0543">Viral nucleoprotein</keyword>
<keyword id="KW-1163">Viral penetration into host nucleus</keyword>
<keyword id="KW-1188">Viral release from host cell</keyword>
<keyword id="KW-0946">Virion</keyword>
<keyword id="KW-0917">Virion maturation</keyword>
<keyword id="KW-1160">Virus entry into host cell</keyword>
<keyword id="KW-0862">Zinc</keyword>
<keyword id="KW-0863">Zinc-finger</keyword>
<evidence type="ECO:0000250" key="1"/>
<evidence type="ECO:0000250" key="2">
    <source>
        <dbReference type="UniProtKB" id="P03347"/>
    </source>
</evidence>
<evidence type="ECO:0000250" key="3">
    <source>
        <dbReference type="UniProtKB" id="P03366"/>
    </source>
</evidence>
<evidence type="ECO:0000250" key="4">
    <source>
        <dbReference type="UniProtKB" id="P03367"/>
    </source>
</evidence>
<evidence type="ECO:0000250" key="5">
    <source>
        <dbReference type="UniProtKB" id="P04585"/>
    </source>
</evidence>
<evidence type="ECO:0000250" key="6">
    <source>
        <dbReference type="UniProtKB" id="P12493"/>
    </source>
</evidence>
<evidence type="ECO:0000250" key="7">
    <source>
        <dbReference type="UniProtKB" id="P12497"/>
    </source>
</evidence>
<evidence type="ECO:0000255" key="8"/>
<evidence type="ECO:0000255" key="9">
    <source>
        <dbReference type="PROSITE-ProRule" id="PRU00047"/>
    </source>
</evidence>
<evidence type="ECO:0000255" key="10">
    <source>
        <dbReference type="PROSITE-ProRule" id="PRU00275"/>
    </source>
</evidence>
<evidence type="ECO:0000255" key="11">
    <source>
        <dbReference type="PROSITE-ProRule" id="PRU00405"/>
    </source>
</evidence>
<evidence type="ECO:0000255" key="12">
    <source>
        <dbReference type="PROSITE-ProRule" id="PRU00408"/>
    </source>
</evidence>
<evidence type="ECO:0000255" key="13">
    <source>
        <dbReference type="PROSITE-ProRule" id="PRU00450"/>
    </source>
</evidence>
<evidence type="ECO:0000255" key="14">
    <source>
        <dbReference type="PROSITE-ProRule" id="PRU00457"/>
    </source>
</evidence>
<evidence type="ECO:0000255" key="15">
    <source>
        <dbReference type="PROSITE-ProRule" id="PRU00506"/>
    </source>
</evidence>
<evidence type="ECO:0000255" key="16">
    <source>
        <dbReference type="PROSITE-ProRule" id="PRU10094"/>
    </source>
</evidence>
<evidence type="ECO:0000256" key="17">
    <source>
        <dbReference type="SAM" id="MobiDB-lite"/>
    </source>
</evidence>
<evidence type="ECO:0000269" key="18">
    <source>
    </source>
</evidence>
<evidence type="ECO:0000305" key="19"/>
<evidence type="ECO:0007829" key="20">
    <source>
        <dbReference type="PDB" id="2FGV"/>
    </source>
</evidence>
<evidence type="ECO:0007829" key="21">
    <source>
        <dbReference type="PDB" id="2FNT"/>
    </source>
</evidence>
<evidence type="ECO:0007829" key="22">
    <source>
        <dbReference type="PDB" id="2J9J"/>
    </source>
</evidence>
<evidence type="ECO:0007829" key="23">
    <source>
        <dbReference type="PDB" id="3FSM"/>
    </source>
</evidence>
<evidence type="ECO:0007829" key="24">
    <source>
        <dbReference type="PDB" id="3KA2"/>
    </source>
</evidence>
<evidence type="ECO:0007829" key="25">
    <source>
        <dbReference type="PDB" id="3NXN"/>
    </source>
</evidence>
<evidence type="ECO:0007829" key="26">
    <source>
        <dbReference type="PDB" id="4EPJ"/>
    </source>
</evidence>
<evidence type="ECO:0007829" key="27">
    <source>
        <dbReference type="PDB" id="4HVP"/>
    </source>
</evidence>